<accession>P62877</accession>
<accession>B2RDY1</accession>
<accession>Q8N6Z8</accession>
<accession>Q9D1S2</accession>
<accession>Q9WUK9</accession>
<accession>Q9Y254</accession>
<dbReference type="EC" id="2.3.2.27" evidence="7"/>
<dbReference type="EC" id="2.3.2.32" evidence="7"/>
<dbReference type="EMBL" id="AF142059">
    <property type="protein sequence ID" value="AAD30146.1"/>
    <property type="molecule type" value="mRNA"/>
</dbReference>
<dbReference type="EMBL" id="AF140598">
    <property type="protein sequence ID" value="AAD29715.1"/>
    <property type="molecule type" value="mRNA"/>
</dbReference>
<dbReference type="EMBL" id="CR456560">
    <property type="protein sequence ID" value="CAG30446.1"/>
    <property type="molecule type" value="mRNA"/>
</dbReference>
<dbReference type="EMBL" id="AK315722">
    <property type="protein sequence ID" value="BAG38078.1"/>
    <property type="molecule type" value="mRNA"/>
</dbReference>
<dbReference type="EMBL" id="AL080242">
    <property type="status" value="NOT_ANNOTATED_CDS"/>
    <property type="molecule type" value="Genomic_DNA"/>
</dbReference>
<dbReference type="EMBL" id="CH471095">
    <property type="protein sequence ID" value="EAW60403.1"/>
    <property type="molecule type" value="Genomic_DNA"/>
</dbReference>
<dbReference type="EMBL" id="BC001466">
    <property type="protein sequence ID" value="AAH01466.1"/>
    <property type="molecule type" value="mRNA"/>
</dbReference>
<dbReference type="EMBL" id="BC017370">
    <property type="protein sequence ID" value="AAH17370.2"/>
    <property type="status" value="ALT_INIT"/>
    <property type="molecule type" value="mRNA"/>
</dbReference>
<dbReference type="EMBL" id="AY099360">
    <property type="protein sequence ID" value="AAM21718.1"/>
    <property type="molecule type" value="mRNA"/>
</dbReference>
<dbReference type="CCDS" id="CCDS14009.1"/>
<dbReference type="PIR" id="T51146">
    <property type="entry name" value="T51146"/>
</dbReference>
<dbReference type="RefSeq" id="NP_055063.1">
    <property type="nucleotide sequence ID" value="NM_014248.4"/>
</dbReference>
<dbReference type="PDB" id="1LDJ">
    <property type="method" value="X-ray"/>
    <property type="resolution" value="3.00 A"/>
    <property type="chains" value="B=19-108"/>
</dbReference>
<dbReference type="PDB" id="1LDK">
    <property type="method" value="X-ray"/>
    <property type="resolution" value="3.10 A"/>
    <property type="chains" value="C=19-108"/>
</dbReference>
<dbReference type="PDB" id="1U6G">
    <property type="method" value="X-ray"/>
    <property type="resolution" value="3.10 A"/>
    <property type="chains" value="B=1-108"/>
</dbReference>
<dbReference type="PDB" id="2HYE">
    <property type="method" value="X-ray"/>
    <property type="resolution" value="3.10 A"/>
    <property type="chains" value="D=1-108"/>
</dbReference>
<dbReference type="PDB" id="2LGV">
    <property type="method" value="NMR"/>
    <property type="chains" value="A=12-108"/>
</dbReference>
<dbReference type="PDB" id="3DPL">
    <property type="method" value="X-ray"/>
    <property type="resolution" value="2.60 A"/>
    <property type="chains" value="R=5-108"/>
</dbReference>
<dbReference type="PDB" id="3DQV">
    <property type="method" value="X-ray"/>
    <property type="resolution" value="3.00 A"/>
    <property type="chains" value="R/Y=5-108"/>
</dbReference>
<dbReference type="PDB" id="3RTR">
    <property type="method" value="X-ray"/>
    <property type="resolution" value="3.21 A"/>
    <property type="chains" value="B/D/F/H=5-108"/>
</dbReference>
<dbReference type="PDB" id="4F52">
    <property type="method" value="X-ray"/>
    <property type="resolution" value="3.00 A"/>
    <property type="chains" value="B/D=5-108"/>
</dbReference>
<dbReference type="PDB" id="4P5O">
    <property type="method" value="X-ray"/>
    <property type="resolution" value="3.11 A"/>
    <property type="chains" value="B/D=5-108"/>
</dbReference>
<dbReference type="PDB" id="5N4W">
    <property type="method" value="X-ray"/>
    <property type="resolution" value="3.90 A"/>
    <property type="chains" value="R=1-102"/>
</dbReference>
<dbReference type="PDB" id="6R6H">
    <property type="method" value="EM"/>
    <property type="resolution" value="8.40 A"/>
    <property type="chains" value="R=17-102"/>
</dbReference>
<dbReference type="PDB" id="6R7F">
    <property type="method" value="EM"/>
    <property type="resolution" value="8.20 A"/>
    <property type="chains" value="R=19-108"/>
</dbReference>
<dbReference type="PDB" id="6R7H">
    <property type="method" value="EM"/>
    <property type="resolution" value="8.80 A"/>
    <property type="chains" value="R=19-108"/>
</dbReference>
<dbReference type="PDB" id="6R7I">
    <property type="method" value="EM"/>
    <property type="resolution" value="5.90 A"/>
    <property type="chains" value="R=19-102"/>
</dbReference>
<dbReference type="PDB" id="6R7N">
    <property type="method" value="EM"/>
    <property type="resolution" value="6.50 A"/>
    <property type="chains" value="R=17-102"/>
</dbReference>
<dbReference type="PDB" id="6TTU">
    <property type="method" value="EM"/>
    <property type="resolution" value="3.70 A"/>
    <property type="chains" value="R=1-108"/>
</dbReference>
<dbReference type="PDB" id="7B5L">
    <property type="method" value="EM"/>
    <property type="resolution" value="3.80 A"/>
    <property type="chains" value="R=1-108"/>
</dbReference>
<dbReference type="PDB" id="7B5M">
    <property type="method" value="EM"/>
    <property type="resolution" value="3.91 A"/>
    <property type="chains" value="R=1-108"/>
</dbReference>
<dbReference type="PDB" id="7B5N">
    <property type="method" value="EM"/>
    <property type="resolution" value="3.60 A"/>
    <property type="chains" value="R=1-108"/>
</dbReference>
<dbReference type="PDB" id="7B5S">
    <property type="method" value="EM"/>
    <property type="resolution" value="3.60 A"/>
    <property type="chains" value="R=1-108"/>
</dbReference>
<dbReference type="PDB" id="7OKQ">
    <property type="method" value="EM"/>
    <property type="resolution" value="8.40 A"/>
    <property type="chains" value="D/H/L/P=2-108"/>
</dbReference>
<dbReference type="PDB" id="7PLO">
    <property type="method" value="EM"/>
    <property type="resolution" value="2.80 A"/>
    <property type="chains" value="T=1-108"/>
</dbReference>
<dbReference type="PDB" id="7Z8B">
    <property type="method" value="EM"/>
    <property type="resolution" value="2.80 A"/>
    <property type="chains" value="R=1-108"/>
</dbReference>
<dbReference type="PDB" id="7Z8R">
    <property type="method" value="EM"/>
    <property type="resolution" value="2.70 A"/>
    <property type="chains" value="R=5-108"/>
</dbReference>
<dbReference type="PDB" id="7Z8T">
    <property type="method" value="EM"/>
    <property type="resolution" value="3.00 A"/>
    <property type="chains" value="R=5-108"/>
</dbReference>
<dbReference type="PDB" id="7Z8V">
    <property type="method" value="EM"/>
    <property type="resolution" value="2.70 A"/>
    <property type="chains" value="R=5-108"/>
</dbReference>
<dbReference type="PDB" id="7ZBW">
    <property type="method" value="EM"/>
    <property type="resolution" value="3.50 A"/>
    <property type="chains" value="R=5-108"/>
</dbReference>
<dbReference type="PDB" id="7ZBZ">
    <property type="method" value="EM"/>
    <property type="resolution" value="3.10 A"/>
    <property type="chains" value="R=5-108"/>
</dbReference>
<dbReference type="PDB" id="8B3G">
    <property type="method" value="EM"/>
    <property type="resolution" value="4.40 A"/>
    <property type="chains" value="R=1-108"/>
</dbReference>
<dbReference type="PDB" id="8B3I">
    <property type="method" value="EM"/>
    <property type="resolution" value="3.50 A"/>
    <property type="chains" value="R=1-108"/>
</dbReference>
<dbReference type="PDB" id="8CDJ">
    <property type="method" value="EM"/>
    <property type="resolution" value="3.40 A"/>
    <property type="chains" value="R=5-108"/>
</dbReference>
<dbReference type="PDB" id="8CDK">
    <property type="method" value="EM"/>
    <property type="resolution" value="3.32 A"/>
    <property type="chains" value="R=5-108"/>
</dbReference>
<dbReference type="PDB" id="8GQ6">
    <property type="method" value="EM"/>
    <property type="resolution" value="3.96 A"/>
    <property type="chains" value="D/E=1-108"/>
</dbReference>
<dbReference type="PDB" id="8H33">
    <property type="method" value="EM"/>
    <property type="resolution" value="7.86 A"/>
    <property type="chains" value="D/E/K/L=1-108"/>
</dbReference>
<dbReference type="PDB" id="8H34">
    <property type="method" value="EM"/>
    <property type="resolution" value="7.99 A"/>
    <property type="chains" value="D/E/K/L/Q/R=1-108"/>
</dbReference>
<dbReference type="PDB" id="8H35">
    <property type="method" value="EM"/>
    <property type="resolution" value="7.41 A"/>
    <property type="chains" value="D/E/K/L/Q/R/W/X=1-108"/>
</dbReference>
<dbReference type="PDB" id="8H36">
    <property type="method" value="EM"/>
    <property type="resolution" value="4.60 A"/>
    <property type="chains" value="D/E=1-108"/>
</dbReference>
<dbReference type="PDB" id="8H37">
    <property type="method" value="EM"/>
    <property type="resolution" value="7.52 A"/>
    <property type="chains" value="D/E/Q/R=1-108"/>
</dbReference>
<dbReference type="PDB" id="8H38">
    <property type="method" value="EM"/>
    <property type="resolution" value="4.25 A"/>
    <property type="chains" value="R=1-108"/>
</dbReference>
<dbReference type="PDB" id="8H3A">
    <property type="method" value="EM"/>
    <property type="resolution" value="7.51 A"/>
    <property type="chains" value="R=1-108"/>
</dbReference>
<dbReference type="PDB" id="8H3F">
    <property type="method" value="EM"/>
    <property type="resolution" value="6.73 A"/>
    <property type="chains" value="R=1-108"/>
</dbReference>
<dbReference type="PDB" id="8H3Q">
    <property type="method" value="EM"/>
    <property type="resolution" value="3.76 A"/>
    <property type="chains" value="E=1-108"/>
</dbReference>
<dbReference type="PDB" id="8H3R">
    <property type="method" value="EM"/>
    <property type="resolution" value="6.36 A"/>
    <property type="chains" value="D/E=1-108"/>
</dbReference>
<dbReference type="PDB" id="8IJ1">
    <property type="method" value="EM"/>
    <property type="resolution" value="4.20 A"/>
    <property type="chains" value="R=1-108"/>
</dbReference>
<dbReference type="PDB" id="8JAQ">
    <property type="method" value="EM"/>
    <property type="resolution" value="3.26 A"/>
    <property type="chains" value="R/V=1-108"/>
</dbReference>
<dbReference type="PDB" id="8JAS">
    <property type="method" value="EM"/>
    <property type="resolution" value="3.54 A"/>
    <property type="chains" value="R/V=1-108"/>
</dbReference>
<dbReference type="PDB" id="8JAV">
    <property type="method" value="EM"/>
    <property type="resolution" value="3.44 A"/>
    <property type="chains" value="R/V=1-108"/>
</dbReference>
<dbReference type="PDB" id="8JE1">
    <property type="method" value="EM"/>
    <property type="resolution" value="3.95 A"/>
    <property type="chains" value="R=1-108"/>
</dbReference>
<dbReference type="PDB" id="8K9I">
    <property type="method" value="EM"/>
    <property type="resolution" value="4.20 A"/>
    <property type="chains" value="R=1-108"/>
</dbReference>
<dbReference type="PDB" id="8KHP">
    <property type="method" value="EM"/>
    <property type="resolution" value="3.67 A"/>
    <property type="chains" value="E/F=1-108"/>
</dbReference>
<dbReference type="PDB" id="8OR0">
    <property type="method" value="EM"/>
    <property type="resolution" value="3.10 A"/>
    <property type="chains" value="B=1-108"/>
</dbReference>
<dbReference type="PDB" id="8OR2">
    <property type="method" value="EM"/>
    <property type="resolution" value="3.20 A"/>
    <property type="chains" value="B=1-108"/>
</dbReference>
<dbReference type="PDB" id="8OR3">
    <property type="method" value="EM"/>
    <property type="resolution" value="2.90 A"/>
    <property type="chains" value="B=1-108"/>
</dbReference>
<dbReference type="PDB" id="8OR4">
    <property type="method" value="EM"/>
    <property type="resolution" value="3.80 A"/>
    <property type="chains" value="B=1-108"/>
</dbReference>
<dbReference type="PDB" id="8PQL">
    <property type="method" value="EM"/>
    <property type="resolution" value="3.76 A"/>
    <property type="chains" value="K=1-108"/>
</dbReference>
<dbReference type="PDB" id="8Q7E">
    <property type="method" value="EM"/>
    <property type="resolution" value="4.40 A"/>
    <property type="chains" value="C/D/G/H/K/L=1-108"/>
</dbReference>
<dbReference type="PDB" id="8Q7H">
    <property type="method" value="EM"/>
    <property type="resolution" value="4.10 A"/>
    <property type="chains" value="C/D=1-108"/>
</dbReference>
<dbReference type="PDB" id="8Q7R">
    <property type="method" value="EM"/>
    <property type="resolution" value="3.71 A"/>
    <property type="chains" value="R=1-108"/>
</dbReference>
<dbReference type="PDB" id="8QU8">
    <property type="method" value="EM"/>
    <property type="resolution" value="3.50 A"/>
    <property type="chains" value="E=2-108"/>
</dbReference>
<dbReference type="PDB" id="8R5H">
    <property type="method" value="EM"/>
    <property type="resolution" value="3.44 A"/>
    <property type="chains" value="R=5-108"/>
</dbReference>
<dbReference type="PDB" id="8RHZ">
    <property type="method" value="EM"/>
    <property type="resolution" value="3.37 A"/>
    <property type="chains" value="C/D=1-108"/>
</dbReference>
<dbReference type="PDB" id="8RWZ">
    <property type="method" value="EM"/>
    <property type="resolution" value="4.00 A"/>
    <property type="chains" value="R=3-108"/>
</dbReference>
<dbReference type="PDB" id="8RX0">
    <property type="method" value="EM"/>
    <property type="resolution" value="3.70 A"/>
    <property type="chains" value="R=3-108"/>
</dbReference>
<dbReference type="PDB" id="8UBU">
    <property type="method" value="EM"/>
    <property type="resolution" value="4.60 A"/>
    <property type="chains" value="B/I=16-108"/>
</dbReference>
<dbReference type="PDB" id="8WDK">
    <property type="method" value="EM"/>
    <property type="resolution" value="3.64 A"/>
    <property type="chains" value="R=21-102"/>
</dbReference>
<dbReference type="PDB" id="8WQA">
    <property type="method" value="EM"/>
    <property type="resolution" value="3.39 A"/>
    <property type="chains" value="I/J=16-108"/>
</dbReference>
<dbReference type="PDB" id="8WQB">
    <property type="method" value="EM"/>
    <property type="resolution" value="3.37 A"/>
    <property type="chains" value="E/I=16-108"/>
</dbReference>
<dbReference type="PDB" id="8WQC">
    <property type="method" value="EM"/>
    <property type="resolution" value="3.54 A"/>
    <property type="chains" value="F/J=16-108"/>
</dbReference>
<dbReference type="PDB" id="8WQE">
    <property type="method" value="EM"/>
    <property type="resolution" value="3.38 A"/>
    <property type="chains" value="I/J=16-108"/>
</dbReference>
<dbReference type="PDB" id="8WQF">
    <property type="method" value="EM"/>
    <property type="resolution" value="3.27 A"/>
    <property type="chains" value="E/I=16-108"/>
</dbReference>
<dbReference type="PDB" id="8WQG">
    <property type="method" value="EM"/>
    <property type="resolution" value="4.09 A"/>
    <property type="chains" value="F/J=16-108"/>
</dbReference>
<dbReference type="PDB" id="8WQH">
    <property type="method" value="EM"/>
    <property type="resolution" value="3.44 A"/>
    <property type="chains" value="B/J=16-108"/>
</dbReference>
<dbReference type="PDB" id="9JKB">
    <property type="method" value="EM"/>
    <property type="resolution" value="3.93 A"/>
    <property type="chains" value="R=16-108"/>
</dbReference>
<dbReference type="PDB" id="9KBD">
    <property type="method" value="EM"/>
    <property type="resolution" value="3.70 A"/>
    <property type="chains" value="R=1-108"/>
</dbReference>
<dbReference type="PDBsum" id="1LDJ"/>
<dbReference type="PDBsum" id="1LDK"/>
<dbReference type="PDBsum" id="1U6G"/>
<dbReference type="PDBsum" id="2HYE"/>
<dbReference type="PDBsum" id="2LGV"/>
<dbReference type="PDBsum" id="3DPL"/>
<dbReference type="PDBsum" id="3DQV"/>
<dbReference type="PDBsum" id="3RTR"/>
<dbReference type="PDBsum" id="4F52"/>
<dbReference type="PDBsum" id="4P5O"/>
<dbReference type="PDBsum" id="5N4W"/>
<dbReference type="PDBsum" id="6R6H"/>
<dbReference type="PDBsum" id="6R7F"/>
<dbReference type="PDBsum" id="6R7H"/>
<dbReference type="PDBsum" id="6R7I"/>
<dbReference type="PDBsum" id="6R7N"/>
<dbReference type="PDBsum" id="6TTU"/>
<dbReference type="PDBsum" id="7B5L"/>
<dbReference type="PDBsum" id="7B5M"/>
<dbReference type="PDBsum" id="7B5N"/>
<dbReference type="PDBsum" id="7B5S"/>
<dbReference type="PDBsum" id="7OKQ"/>
<dbReference type="PDBsum" id="7PLO"/>
<dbReference type="PDBsum" id="7Z8B"/>
<dbReference type="PDBsum" id="7Z8R"/>
<dbReference type="PDBsum" id="7Z8T"/>
<dbReference type="PDBsum" id="7Z8V"/>
<dbReference type="PDBsum" id="7ZBW"/>
<dbReference type="PDBsum" id="7ZBZ"/>
<dbReference type="PDBsum" id="8B3G"/>
<dbReference type="PDBsum" id="8B3I"/>
<dbReference type="PDBsum" id="8CDJ"/>
<dbReference type="PDBsum" id="8CDK"/>
<dbReference type="PDBsum" id="8GQ6"/>
<dbReference type="PDBsum" id="8H33"/>
<dbReference type="PDBsum" id="8H34"/>
<dbReference type="PDBsum" id="8H35"/>
<dbReference type="PDBsum" id="8H36"/>
<dbReference type="PDBsum" id="8H37"/>
<dbReference type="PDBsum" id="8H38"/>
<dbReference type="PDBsum" id="8H3A"/>
<dbReference type="PDBsum" id="8H3F"/>
<dbReference type="PDBsum" id="8H3Q"/>
<dbReference type="PDBsum" id="8H3R"/>
<dbReference type="PDBsum" id="8IJ1"/>
<dbReference type="PDBsum" id="8JAQ"/>
<dbReference type="PDBsum" id="8JAS"/>
<dbReference type="PDBsum" id="8JAV"/>
<dbReference type="PDBsum" id="8JE1"/>
<dbReference type="PDBsum" id="8K9I"/>
<dbReference type="PDBsum" id="8KHP"/>
<dbReference type="PDBsum" id="8OR0"/>
<dbReference type="PDBsum" id="8OR2"/>
<dbReference type="PDBsum" id="8OR3"/>
<dbReference type="PDBsum" id="8OR4"/>
<dbReference type="PDBsum" id="8PQL"/>
<dbReference type="PDBsum" id="8Q7E"/>
<dbReference type="PDBsum" id="8Q7H"/>
<dbReference type="PDBsum" id="8Q7R"/>
<dbReference type="PDBsum" id="8QU8"/>
<dbReference type="PDBsum" id="8R5H"/>
<dbReference type="PDBsum" id="8RHZ"/>
<dbReference type="PDBsum" id="8RWZ"/>
<dbReference type="PDBsum" id="8RX0"/>
<dbReference type="PDBsum" id="8UBU"/>
<dbReference type="PDBsum" id="8WDK"/>
<dbReference type="PDBsum" id="8WQA"/>
<dbReference type="PDBsum" id="8WQB"/>
<dbReference type="PDBsum" id="8WQC"/>
<dbReference type="PDBsum" id="8WQE"/>
<dbReference type="PDBsum" id="8WQF"/>
<dbReference type="PDBsum" id="8WQG"/>
<dbReference type="PDBsum" id="8WQH"/>
<dbReference type="PDBsum" id="9JKB"/>
<dbReference type="PDBsum" id="9KBD"/>
<dbReference type="EMDB" id="EMD-10585"/>
<dbReference type="EMDB" id="EMD-12037"/>
<dbReference type="EMDB" id="EMD-12040"/>
<dbReference type="EMDB" id="EMD-12041"/>
<dbReference type="EMDB" id="EMD-12050"/>
<dbReference type="EMDB" id="EMD-12964"/>
<dbReference type="EMDB" id="EMD-13494"/>
<dbReference type="EMDB" id="EMD-14547"/>
<dbReference type="EMDB" id="EMD-14561"/>
<dbReference type="EMDB" id="EMD-14563"/>
<dbReference type="EMDB" id="EMD-14564"/>
<dbReference type="EMDB" id="EMD-14594"/>
<dbReference type="EMDB" id="EMD-15827"/>
<dbReference type="EMDB" id="EMD-15829"/>
<dbReference type="EMDB" id="EMD-16575"/>
<dbReference type="EMDB" id="EMD-16576"/>
<dbReference type="EMDB" id="EMD-17114"/>
<dbReference type="EMDB" id="EMD-17115"/>
<dbReference type="EMDB" id="EMD-17116"/>
<dbReference type="EMDB" id="EMD-17117"/>
<dbReference type="EMDB" id="EMD-17822"/>
<dbReference type="EMDB" id="EMD-18214"/>
<dbReference type="EMDB" id="EMD-18216"/>
<dbReference type="EMDB" id="EMD-18217"/>
<dbReference type="EMDB" id="EMD-18218"/>
<dbReference type="EMDB" id="EMD-18220"/>
<dbReference type="EMDB" id="EMD-18221"/>
<dbReference type="EMDB" id="EMD-18222"/>
<dbReference type="EMDB" id="EMD-18223"/>
<dbReference type="EMDB" id="EMD-18230"/>
<dbReference type="EMDB" id="EMD-18657"/>
<dbReference type="EMDB" id="EMD-18915"/>
<dbReference type="EMDB" id="EMD-19179"/>
<dbReference type="EMDB" id="EMD-19856"/>
<dbReference type="EMDB" id="EMD-19857"/>
<dbReference type="EMDB" id="EMD-19858"/>
<dbReference type="EMDB" id="EMD-19859"/>
<dbReference type="EMDB" id="EMD-19860"/>
<dbReference type="EMDB" id="EMD-3401"/>
<dbReference type="EMDB" id="EMD-34199"/>
<dbReference type="EMDB" id="EMD-34449"/>
<dbReference type="EMDB" id="EMD-34450"/>
<dbReference type="EMDB" id="EMD-34451"/>
<dbReference type="EMDB" id="EMD-34452"/>
<dbReference type="EMDB" id="EMD-34453"/>
<dbReference type="EMDB" id="EMD-34455"/>
<dbReference type="EMDB" id="EMD-34462"/>
<dbReference type="EMDB" id="EMD-34467"/>
<dbReference type="EMDB" id="EMD-34473"/>
<dbReference type="EMDB" id="EMD-34474"/>
<dbReference type="EMDB" id="EMD-35461"/>
<dbReference type="EMDB" id="EMD-36131"/>
<dbReference type="EMDB" id="EMD-36133"/>
<dbReference type="EMDB" id="EMD-36135"/>
<dbReference type="EMDB" id="EMD-36182"/>
<dbReference type="EMDB" id="EMD-36987"/>
<dbReference type="EMDB" id="EMD-37247"/>
<dbReference type="EMDB" id="EMD-37464"/>
<dbReference type="EMDB" id="EMD-37736"/>
<dbReference type="EMDB" id="EMD-37737"/>
<dbReference type="EMDB" id="EMD-37739"/>
<dbReference type="EMDB" id="EMD-37742"/>
<dbReference type="EMDB" id="EMD-37743"/>
<dbReference type="EMDB" id="EMD-37744"/>
<dbReference type="EMDB" id="EMD-37745"/>
<dbReference type="EMDB" id="EMD-42105"/>
<dbReference type="EMDB" id="EMD-46644"/>
<dbReference type="EMDB" id="EMD-4736"/>
<dbReference type="EMDB" id="EMD-4739"/>
<dbReference type="EMDB" id="EMD-4741"/>
<dbReference type="EMDB" id="EMD-4742"/>
<dbReference type="EMDB" id="EMD-4744"/>
<dbReference type="EMDB" id="EMD-50292"/>
<dbReference type="EMDB" id="EMD-50295"/>
<dbReference type="EMDB" id="EMD-61550"/>
<dbReference type="EMDB" id="EMD-62222"/>
<dbReference type="SMR" id="P62877"/>
<dbReference type="BioGRID" id="115301">
    <property type="interactions" value="592"/>
</dbReference>
<dbReference type="ComplexPortal" id="CPX-2214">
    <property type="entry name" value="LRR1-Elongin C-Elongin B E3 ubiquitin ligase complex"/>
</dbReference>
<dbReference type="ComplexPortal" id="CPX-2217">
    <property type="entry name" value="FEM1A-Elongin C-Elongin B E3 ubiquitin ligase complex"/>
</dbReference>
<dbReference type="ComplexPortal" id="CPX-2218">
    <property type="entry name" value="FEB1B-Elongin C-Elongin B E3 ubiquitin ligase complex"/>
</dbReference>
<dbReference type="ComplexPortal" id="CPX-2219">
    <property type="entry name" value="FEB1C-Elongin C-Elongin B E3 ubiquitin ligase complex"/>
</dbReference>
<dbReference type="ComplexPortal" id="CPX-2220">
    <property type="entry name" value="ZYG11B-Elongin C-Elongin B E3 ubiquitin ligase complex"/>
</dbReference>
<dbReference type="ComplexPortal" id="CPX-2221">
    <property type="entry name" value="APPBP2-Elongin C-Elongin B E3 ubiquitin ligase complex"/>
</dbReference>
<dbReference type="ComplexPortal" id="CPX-2222">
    <property type="entry name" value="ZER1-Elongin C-Elongin B E3 ubiquitin ligase complex"/>
</dbReference>
<dbReference type="ComplexPortal" id="CPX-2223">
    <property type="entry name" value="KLHDC10-Elongin C-Elongin B E3 ubiquitin ligase complex"/>
</dbReference>
<dbReference type="ComplexPortal" id="CPX-2226">
    <property type="entry name" value="KLHDC2-Elongin C-Elongin B E3 ubiquitin ligase complex"/>
</dbReference>
<dbReference type="ComplexPortal" id="CPX-2228">
    <property type="entry name" value="KLHDC3-Elongin C-Elongin B E3 ubiquitin ligase complex"/>
</dbReference>
<dbReference type="ComplexPortal" id="CPX-2229">
    <property type="entry name" value="PRAME-Elongin C-Elongin B E3 ubiquitin ligase complex"/>
</dbReference>
<dbReference type="ComplexPortal" id="CPX-2239">
    <property type="entry name" value="SCF E3 ubiquitin ligase complex, FBXL5 variant"/>
</dbReference>
<dbReference type="ComplexPortal" id="CPX-2241">
    <property type="entry name" value="SCF E3 ubiquitin ligase complex, FBXL13 variant"/>
</dbReference>
<dbReference type="ComplexPortal" id="CPX-2250">
    <property type="entry name" value="VHL-Elongin C-Elongin B E3 ubiquitin ligase complex"/>
</dbReference>
<dbReference type="ComplexPortal" id="CPX-2300">
    <property type="entry name" value="CRL3 E3 ubiquitin ligase complex, SPOP variant"/>
</dbReference>
<dbReference type="ComplexPortal" id="CPX-2319">
    <property type="entry name" value="SCF E3 ubiquitin ligase complex, FBXL14 variant"/>
</dbReference>
<dbReference type="ComplexPortal" id="CPX-2343">
    <property type="entry name" value="SCF E3 ubiquitin ligase complex, FBXL16 variant"/>
</dbReference>
<dbReference type="ComplexPortal" id="CPX-2365">
    <property type="entry name" value="SCF E3 ubiquitin ligase complex, BTRC variant"/>
</dbReference>
<dbReference type="ComplexPortal" id="CPX-2399">
    <property type="entry name" value="CRL4-DCAF13 E3 ubiquitin ligase complex, CUL4A variant"/>
</dbReference>
<dbReference type="ComplexPortal" id="CPX-2403">
    <property type="entry name" value="CRL4-DCAF11 E3 ubiquitin ligase complex, CUL4A variant"/>
</dbReference>
<dbReference type="ComplexPortal" id="CPX-2404">
    <property type="entry name" value="CRL4-DCAF11 E3 ubiquitin ligase complex, CUL4B variant"/>
</dbReference>
<dbReference type="ComplexPortal" id="CPX-2405">
    <property type="entry name" value="CRL4-DCAF12 E3 ubiquitin ligase complex, CUL4A variant"/>
</dbReference>
<dbReference type="ComplexPortal" id="CPX-2406">
    <property type="entry name" value="CRL4-DCAF12 E3 ubiquitin ligase complex, CUL4B variant"/>
</dbReference>
<dbReference type="ComplexPortal" id="CPX-2407">
    <property type="entry name" value="CRL4-DCAF13 E3 ubiquitin ligase complex, CUL4B variant"/>
</dbReference>
<dbReference type="ComplexPortal" id="CPX-2411">
    <property type="entry name" value="CRL4-DCAF14 E3 ubiquitin ligase complex, CUL4A variant"/>
</dbReference>
<dbReference type="ComplexPortal" id="CPX-2412">
    <property type="entry name" value="CRL4-DCAF14 E3 ubiquitin ligase complex, CUL4B variant"/>
</dbReference>
<dbReference type="ComplexPortal" id="CPX-2413">
    <property type="entry name" value="CRL4-DCAF16 E3 ubiquitin ligase complex, CUL4A variant"/>
</dbReference>
<dbReference type="ComplexPortal" id="CPX-2414">
    <property type="entry name" value="CRL4-DCAF16 E3 ubiquitin ligase complex, CUL4B variant"/>
</dbReference>
<dbReference type="ComplexPortal" id="CPX-2415">
    <property type="entry name" value="CRL4-DCAF17 E3 ubiquitin ligase complex, CUL4A variant"/>
</dbReference>
<dbReference type="ComplexPortal" id="CPX-2416">
    <property type="entry name" value="CRL4-DCAF17 E3 ubiquitin ligase complex, CUL4B variant"/>
</dbReference>
<dbReference type="ComplexPortal" id="CPX-2438">
    <property type="entry name" value="SCF E3 ubiquitin ligase complex, FBXL8 variant"/>
</dbReference>
<dbReference type="ComplexPortal" id="CPX-2489">
    <property type="entry name" value="SCF E3 ubiquitin ligase complex, FBXL22 variant"/>
</dbReference>
<dbReference type="ComplexPortal" id="CPX-2492">
    <property type="entry name" value="SCF E3 ubiquitin ligase complex, FBXL15 variant"/>
</dbReference>
<dbReference type="ComplexPortal" id="CPX-2512">
    <property type="entry name" value="SCF E3 ubiquitin ligase complex, FBXL4 variant"/>
</dbReference>
<dbReference type="ComplexPortal" id="CPX-2516">
    <property type="entry name" value="SCF E3 ubiquitin ligase complex, FBXL6 variant"/>
</dbReference>
<dbReference type="ComplexPortal" id="CPX-2538">
    <property type="entry name" value="SCF E3 ubiquitin ligase complex, KDM2A variant"/>
</dbReference>
<dbReference type="ComplexPortal" id="CPX-2553">
    <property type="entry name" value="SCF E3 ubiquitin ligase complex, FBXL18 variant"/>
</dbReference>
<dbReference type="ComplexPortal" id="CPX-2554">
    <property type="entry name" value="SCF E3 ubiquitin ligase complex, FBXL19 variant"/>
</dbReference>
<dbReference type="ComplexPortal" id="CPX-2658">
    <property type="entry name" value="SCF E3 ubiquitin ligase complex, FBXL12 variant"/>
</dbReference>
<dbReference type="ComplexPortal" id="CPX-2683">
    <property type="entry name" value="SCF E3 ubiquitin ligase complex, FBXL7 variant"/>
</dbReference>
<dbReference type="ComplexPortal" id="CPX-2748">
    <property type="entry name" value="SCF E3 ubiquitin ligase complex, FBXL21 variant"/>
</dbReference>
<dbReference type="ComplexPortal" id="CPX-2757">
    <property type="entry name" value="CRL4-ERCC8 E3 ubiquitin ligase complex, CUL4A variant"/>
</dbReference>
<dbReference type="ComplexPortal" id="CPX-2758">
    <property type="entry name" value="CRL4-ERCC8 E3 ubiquitin ligase complex, CUL4B variant"/>
</dbReference>
<dbReference type="ComplexPortal" id="CPX-2759">
    <property type="entry name" value="CRL4-CRBN E3 ubiquitin ligase complex, CUL4A variant"/>
</dbReference>
<dbReference type="ComplexPortal" id="CPX-2762">
    <property type="entry name" value="CRL4-CRBN E3 ubiquitin ligase complex, CUL4B variant"/>
</dbReference>
<dbReference type="ComplexPortal" id="CPX-2765">
    <property type="entry name" value="CRL4-DCAF15 E3 ubiquitin ligase complex, CUL4B variant"/>
</dbReference>
<dbReference type="ComplexPortal" id="CPX-2766">
    <property type="entry name" value="CRL4-DCAF15 E3 ubiquitin ligase complex, CUL4A variant"/>
</dbReference>
<dbReference type="ComplexPortal" id="CPX-2769">
    <property type="entry name" value="CRL4-DCAF1 E3 ubiquitin ligase complex, CUL4A variant"/>
</dbReference>
<dbReference type="ComplexPortal" id="CPX-2770">
    <property type="entry name" value="CRL4-DCAF1 E3 ubiquitin ligase complex, CUL4B variant"/>
</dbReference>
<dbReference type="ComplexPortal" id="CPX-2773">
    <property type="entry name" value="SCF E3 ubiquitin ligase complex, FBXL17 variant"/>
</dbReference>
<dbReference type="ComplexPortal" id="CPX-2777">
    <property type="entry name" value="CRL4-CDT2 E3 ubiquitin ligase complex, CUL4B variant"/>
</dbReference>
<dbReference type="ComplexPortal" id="CPX-2778">
    <property type="entry name" value="CRL4-AMBRA1 E3 ubiquitin ligase complex, CUL4B variant"/>
</dbReference>
<dbReference type="ComplexPortal" id="CPX-2782">
    <property type="entry name" value="CRL4-DCAF5 E3 ubiquitin ligase complex, CUL4A variant"/>
</dbReference>
<dbReference type="ComplexPortal" id="CPX-2783">
    <property type="entry name" value="CRL4-DCAF5 E3 ubiquitin ligase complex, CUL4B variant"/>
</dbReference>
<dbReference type="ComplexPortal" id="CPX-2784">
    <property type="entry name" value="CRL4-DCAF6 E3 ubiquitin ligase complex, CUL4A variant"/>
</dbReference>
<dbReference type="ComplexPortal" id="CPX-2785">
    <property type="entry name" value="CRL4-DCAF7 E3 ubiquitin ligase complex, CUL4A variant"/>
</dbReference>
<dbReference type="ComplexPortal" id="CPX-2786">
    <property type="entry name" value="CRL4-DCAF7 E3 ubiquitin ligase complex, CUL4B variant"/>
</dbReference>
<dbReference type="ComplexPortal" id="CPX-2787">
    <property type="entry name" value="CRL4-DCAF9 E3 ubiquitin ligase complex, CUL4A variant"/>
</dbReference>
<dbReference type="ComplexPortal" id="CPX-2795">
    <property type="entry name" value="CRL4-CDT2 E3 ubiquitin ligase complex, CUL4A variant"/>
</dbReference>
<dbReference type="ComplexPortal" id="CPX-2797">
    <property type="entry name" value="CRL4-AMBRA1 E3 ubiquitin ligase complex, CUL4A variant"/>
</dbReference>
<dbReference type="ComplexPortal" id="CPX-2799">
    <property type="entry name" value="CRL4-DCAF4 E3 ubiquitin ligase complex, CUL4A variant"/>
</dbReference>
<dbReference type="ComplexPortal" id="CPX-2804">
    <property type="entry name" value="CRL4-DCAF6 E3 ubiquitin ligase complex, CUL4B variant"/>
</dbReference>
<dbReference type="ComplexPortal" id="CPX-2809">
    <property type="entry name" value="CRL4-DCAF9 E3 ubiquitin ligase complex, CUL4B variant"/>
</dbReference>
<dbReference type="ComplexPortal" id="CPX-2816">
    <property type="entry name" value="CRL4-DCAF8 E3 ubiquitin ligase complex, CUL4B variant"/>
</dbReference>
<dbReference type="ComplexPortal" id="CPX-2817">
    <property type="entry name" value="CRL4-DCAF10 E3 ubiquitin ligase complex, CUL4A variant"/>
</dbReference>
<dbReference type="ComplexPortal" id="CPX-2818">
    <property type="entry name" value="CRL4-DCAF8 E3 ubiquitin ligase complex, CUL4A variant"/>
</dbReference>
<dbReference type="ComplexPortal" id="CPX-2819">
    <property type="entry name" value="CRL4-DCAF10 E3 ubiquitin ligase complex, CUL4B variant"/>
</dbReference>
<dbReference type="ComplexPortal" id="CPX-2832">
    <property type="entry name" value="SCF E3 ubiquitin ligase complex, KDM2B variant"/>
</dbReference>
<dbReference type="ComplexPortal" id="CPX-2859">
    <property type="entry name" value="CRL4-DCAF4 E3 ubiquitin ligase complex, CUL4B variant"/>
</dbReference>
<dbReference type="ComplexPortal" id="CPX-2873">
    <property type="entry name" value="SCF E3 ubiquitin ligase complex, FBXL20 variant"/>
</dbReference>
<dbReference type="ComplexPortal" id="CPX-3291">
    <property type="entry name" value="SCF E3 ubiquitin ligase complex, FBXL3 variant"/>
</dbReference>
<dbReference type="ComplexPortal" id="CPX-3292">
    <property type="entry name" value="SCF E3 ubiquitin ligase complex, FBXL2 variant"/>
</dbReference>
<dbReference type="ComplexPortal" id="CPX-3295">
    <property type="entry name" value="SCF E3 ubiquitin ligase complex, SKP2 variant"/>
</dbReference>
<dbReference type="ComplexPortal" id="CPX-477">
    <property type="entry name" value="CRL4-DDB2 E3 ubiquitin ligase complex, CUL4A variant"/>
</dbReference>
<dbReference type="ComplexPortal" id="CPX-648">
    <property type="entry name" value="CRL4-DDB2 E3 ubiquitin ligase complex, CUL4B variant"/>
</dbReference>
<dbReference type="ComplexPortal" id="CPX-7747">
    <property type="entry name" value="SCF E3 ubiquitin ligase complex, FBXW2 variant"/>
</dbReference>
<dbReference type="ComplexPortal" id="CPX-7761">
    <property type="entry name" value="SCF E3 ubiquitin ligase complex, FBXW4 variant"/>
</dbReference>
<dbReference type="ComplexPortal" id="CPX-7762">
    <property type="entry name" value="SCF E3 ubiquitin ligase complex, FBXW5 variant"/>
</dbReference>
<dbReference type="ComplexPortal" id="CPX-7763">
    <property type="entry name" value="SCF E3 ubiquitin ligase complex, FBXW7 variant"/>
</dbReference>
<dbReference type="ComplexPortal" id="CPX-7784">
    <property type="entry name" value="SCF E3 ubiquitin ligase complex, FBXW8-CUL7 variant"/>
</dbReference>
<dbReference type="ComplexPortal" id="CPX-7785">
    <property type="entry name" value="SCF E3 ubiquitin ligase complex, FBXW9 variant"/>
</dbReference>
<dbReference type="ComplexPortal" id="CPX-7786">
    <property type="entry name" value="SCF E3 ubiquitin ligase complex, FBXW10 variant"/>
</dbReference>
<dbReference type="ComplexPortal" id="CPX-7821">
    <property type="entry name" value="SCF E3 ubiquitin ligase complex, FBXW11 variant"/>
</dbReference>
<dbReference type="ComplexPortal" id="CPX-7822">
    <property type="entry name" value="SCF E3 ubiquitin ligase complex, FBXW12 variant"/>
</dbReference>
<dbReference type="ComplexPortal" id="CPX-7846">
    <property type="entry name" value="SCF E3 ubiquitin ligase complex, CCNF variant"/>
</dbReference>
<dbReference type="ComplexPortal" id="CPX-7847">
    <property type="entry name" value="SCF E3 ubiquitin ligase complex, FBXO2 variant"/>
</dbReference>
<dbReference type="ComplexPortal" id="CPX-7881">
    <property type="entry name" value="SCF E3 ubiquitin ligase complex, FBXO3 variant"/>
</dbReference>
<dbReference type="ComplexPortal" id="CPX-7882">
    <property type="entry name" value="SCF E3 ubiquitin ligase complex, FBXO4 variant"/>
</dbReference>
<dbReference type="ComplexPortal" id="CPX-7904">
    <property type="entry name" value="SCF E3 ubiquitin ligase complex, FBXO5 variant"/>
</dbReference>
<dbReference type="ComplexPortal" id="CPX-7905">
    <property type="entry name" value="SCF E3 ubiquitin ligase complex, FBXO6 variant"/>
</dbReference>
<dbReference type="ComplexPortal" id="CPX-7906">
    <property type="entry name" value="SCF E3 ubiquitin ligase complex, FBXO7 variant"/>
</dbReference>
<dbReference type="ComplexPortal" id="CPX-7921">
    <property type="entry name" value="SCF E3 ubiquitin ligase complex, FBXO8 variant"/>
</dbReference>
<dbReference type="ComplexPortal" id="CPX-7922">
    <property type="entry name" value="SCF E3 ubiquitin ligase complex, FBXO9 variant"/>
</dbReference>
<dbReference type="ComplexPortal" id="CPX-7923">
    <property type="entry name" value="SCF E3 ubiquitin ligase complex, FBXO10 variant"/>
</dbReference>
<dbReference type="ComplexPortal" id="CPX-7924">
    <property type="entry name" value="SCF E3 ubiquitin ligase complex, FBXO11 variant"/>
</dbReference>
<dbReference type="ComplexPortal" id="CPX-7925">
    <property type="entry name" value="SCF E3 ubiquitin ligase complex, FBXO15 variant"/>
</dbReference>
<dbReference type="ComplexPortal" id="CPX-7926">
    <property type="entry name" value="SCF E3 ubiquitin ligase complex, FBXO16 variant"/>
</dbReference>
<dbReference type="ComplexPortal" id="CPX-7927">
    <property type="entry name" value="SCF E3 ubiquitin ligase complex, FBXO17 variant"/>
</dbReference>
<dbReference type="ComplexPortal" id="CPX-7928">
    <property type="entry name" value="SCF E3 ubiquitin ligase complex, FBH1 variant"/>
</dbReference>
<dbReference type="ComplexPortal" id="CPX-7929">
    <property type="entry name" value="SCF E3 ubiquitin ligase complex, LMO7 variant"/>
</dbReference>
<dbReference type="ComplexPortal" id="CPX-7930">
    <property type="entry name" value="SCF E3 ubiquitin ligase complex, FBXO21 variant"/>
</dbReference>
<dbReference type="ComplexPortal" id="CPX-7962">
    <property type="entry name" value="SCF E3 ubiquitin ligase complex, FBXO22 variant"/>
</dbReference>
<dbReference type="ComplexPortal" id="CPX-7963">
    <property type="entry name" value="SCF E3 ubiquitin ligase complex, FBXO24 variant"/>
</dbReference>
<dbReference type="ComplexPortal" id="CPX-7965">
    <property type="entry name" value="SCF E3 ubiquitin ligase complex, FBXO25 variant"/>
</dbReference>
<dbReference type="ComplexPortal" id="CPX-7966">
    <property type="entry name" value="SCF E3 ubiquitin ligase complex, FBXO27 variant"/>
</dbReference>
<dbReference type="ComplexPortal" id="CPX-7967">
    <property type="entry name" value="SCF E3 ubiquitin ligase complex, FBXO28 variant"/>
</dbReference>
<dbReference type="ComplexPortal" id="CPX-7968">
    <property type="entry name" value="SCF E3 ubiquitin ligase complex, FBXO30 variant"/>
</dbReference>
<dbReference type="ComplexPortal" id="CPX-7971">
    <property type="entry name" value="SCF E3 ubiquitin ligase complex, FBXO31 variant"/>
</dbReference>
<dbReference type="ComplexPortal" id="CPX-7972">
    <property type="entry name" value="SCF E3 ubiquitin ligase complex, FBXO32 variant"/>
</dbReference>
<dbReference type="ComplexPortal" id="CPX-7973">
    <property type="entry name" value="SCF E3 ubiquitin ligase complex, FBXO33 variant"/>
</dbReference>
<dbReference type="ComplexPortal" id="CPX-7975">
    <property type="entry name" value="SCF E3 ubiquitin ligase complex, FBXO34 variant"/>
</dbReference>
<dbReference type="ComplexPortal" id="CPX-7976">
    <property type="entry name" value="SCF E3 ubiquitin ligase complex, FBXO36 variant"/>
</dbReference>
<dbReference type="ComplexPortal" id="CPX-7977">
    <property type="entry name" value="SCF E3 ubiquitin ligase complex, FBXO38 variant"/>
</dbReference>
<dbReference type="ComplexPortal" id="CPX-7979">
    <property type="entry name" value="SCF E3 ubiquitin ligase complex, FBXO39 variant"/>
</dbReference>
<dbReference type="ComplexPortal" id="CPX-7981">
    <property type="entry name" value="SCF E3 ubiquitin ligase complex, FBXO40 variant"/>
</dbReference>
<dbReference type="ComplexPortal" id="CPX-7982">
    <property type="entry name" value="SCF E3 ubiquitin ligase complex, FBXO41 variant"/>
</dbReference>
<dbReference type="ComplexPortal" id="CPX-7983">
    <property type="entry name" value="SCF E3 ubiquitin ligase complex, FBXO42 variant"/>
</dbReference>
<dbReference type="ComplexPortal" id="CPX-8002">
    <property type="entry name" value="SCF E3 ubiquitin ligase complex, FBXO43 variant"/>
</dbReference>
<dbReference type="ComplexPortal" id="CPX-8003">
    <property type="entry name" value="SCF E3 ubiquitin ligase complex, FBXO44 variant"/>
</dbReference>
<dbReference type="ComplexPortal" id="CPX-8005">
    <property type="entry name" value="SCF E3 ubiquitin ligase complex, FBXO46 variant"/>
</dbReference>
<dbReference type="ComplexPortal" id="CPX-8006">
    <property type="entry name" value="SCF E3 ubiquitin ligase complex, FBXO47 variant"/>
</dbReference>
<dbReference type="ComplexPortal" id="CPX-8007">
    <property type="entry name" value="CRL3 E3 ubiquitin ligase complex, KLHL1 variant"/>
</dbReference>
<dbReference type="ComplexPortal" id="CPX-8025">
    <property type="entry name" value="CRL3 E3 ubiquitin ligase complex, KLHL2 variant"/>
</dbReference>
<dbReference type="ComplexPortal" id="CPX-8041">
    <property type="entry name" value="CRL3 E3 ubiquitin ligase complex, KLHL3 variant"/>
</dbReference>
<dbReference type="ComplexPortal" id="CPX-8061">
    <property type="entry name" value="CRL3 E3 ubiquitin ligase complex, KLHL4 variant"/>
</dbReference>
<dbReference type="ComplexPortal" id="CPX-8063">
    <property type="entry name" value="CRL3 E3 ubiquitin ligase complex, KLHL5 variant"/>
</dbReference>
<dbReference type="ComplexPortal" id="CPX-8064">
    <property type="entry name" value="CRL3 E3 ubiquitin ligase complex, KLHL6 variant"/>
</dbReference>
<dbReference type="ComplexPortal" id="CPX-8083">
    <property type="entry name" value="CRL3 E3 ubiquitin ligase complex, KLHL9 variant"/>
</dbReference>
<dbReference type="ComplexPortal" id="CPX-8084">
    <property type="entry name" value="CRL3 E3 ubiquitin ligase complex, KLHL7 variant"/>
</dbReference>
<dbReference type="ComplexPortal" id="CPX-8085">
    <property type="entry name" value="CRL3 E3 ubiquitin ligase complex, KLHL8 variant"/>
</dbReference>
<dbReference type="ComplexPortal" id="CPX-8087">
    <property type="entry name" value="CRL3 E3 ubiquitin ligase complex, KLHL10 variant"/>
</dbReference>
<dbReference type="ComplexPortal" id="CPX-8088">
    <property type="entry name" value="CRL3 E3 ubiquitin ligase complex, KLHL11 variant"/>
</dbReference>
<dbReference type="ComplexPortal" id="CPX-8089">
    <property type="entry name" value="CRL3 E3 ubiquitin ligase complex, KLHL12 variant"/>
</dbReference>
<dbReference type="ComplexPortal" id="CPX-8090">
    <property type="entry name" value="CRL3 E3 ubiquitin ligase complex, KLHL13 variant"/>
</dbReference>
<dbReference type="ComplexPortal" id="CPX-8091">
    <property type="entry name" value="CRL3 E3 ubiquitin ligase complex, KLHL14 variant"/>
</dbReference>
<dbReference type="ComplexPortal" id="CPX-8097">
    <property type="entry name" value="CRL3 E3 ubiquitin ligase complex, KLHL15 variant"/>
</dbReference>
<dbReference type="ComplexPortal" id="CPX-8102">
    <property type="entry name" value="CRL3 E3 ubiquitin ligase complex, KLHL16 variant"/>
</dbReference>
<dbReference type="ComplexPortal" id="CPX-8103">
    <property type="entry name" value="CRL3 E3 ubiquitin ligase complex, KLHL17 variant"/>
</dbReference>
<dbReference type="ComplexPortal" id="CPX-8106">
    <property type="entry name" value="CRL3 E3 ubiquitin ligase complex, KLHL18 variant"/>
</dbReference>
<dbReference type="ComplexPortal" id="CPX-8107">
    <property type="entry name" value="CRL3 E3 ubiquitin ligase complex, KEAP1 variant"/>
</dbReference>
<dbReference type="ComplexPortal" id="CPX-8108">
    <property type="entry name" value="SCF E3 ubiquitin ligase complex, TSPAN17 variant"/>
</dbReference>
<dbReference type="ComplexPortal" id="CPX-8109">
    <property type="entry name" value="CRL3 E3 ubiquitin ligase complex, KLHL20 variant"/>
</dbReference>
<dbReference type="ComplexPortal" id="CPX-8110">
    <property type="entry name" value="CRL3 E3 ubiquitin ligase complex, KLHL21 variant"/>
</dbReference>
<dbReference type="ComplexPortal" id="CPX-8122">
    <property type="entry name" value="CRL3 E3 ubiquitin ligase complex, KLHL22 variant"/>
</dbReference>
<dbReference type="ComplexPortal" id="CPX-8123">
    <property type="entry name" value="CRL3 E3 ubiquitin ligase complex, KLHL23 variant"/>
</dbReference>
<dbReference type="ComplexPortal" id="CPX-8125">
    <property type="entry name" value="CRL3 E3 ubiquitin ligase complex, KLHL24 variant"/>
</dbReference>
<dbReference type="ComplexPortal" id="CPX-8126">
    <property type="entry name" value="CRL3 E3 ubiquitin ligase complex, KLHL25 variant"/>
</dbReference>
<dbReference type="ComplexPortal" id="CPX-8130">
    <property type="entry name" value="CRL3 E3 ubiquitin ligase complex, KLHL26 variant"/>
</dbReference>
<dbReference type="ComplexPortal" id="CPX-8131">
    <property type="entry name" value="CRL3 E3 ubiquitin ligase complex, IPP variant"/>
</dbReference>
<dbReference type="ComplexPortal" id="CPX-8135">
    <property type="entry name" value="CRL3 E3 ubiquitin ligase complex, KLHL28 variant"/>
</dbReference>
<dbReference type="ComplexPortal" id="CPX-8147">
    <property type="entry name" value="CRL3 E3 ubiquitin ligase complex, KLHL29 variant"/>
</dbReference>
<dbReference type="ComplexPortal" id="CPX-8150">
    <property type="entry name" value="CRL3 E3 ubiquitin ligase complex, KLHL30 variant"/>
</dbReference>
<dbReference type="ComplexPortal" id="CPX-8151">
    <property type="entry name" value="CRL3 E3 ubiquitin ligase complex, KLHL31 variant"/>
</dbReference>
<dbReference type="ComplexPortal" id="CPX-8201">
    <property type="entry name" value="CRL3 E3 ubiquitin ligase complex, KLHL32 variant"/>
</dbReference>
<dbReference type="ComplexPortal" id="CPX-8202">
    <property type="entry name" value="CRL3 E3 ubiquitin ligase complex, KLHL34 variant"/>
</dbReference>
<dbReference type="ComplexPortal" id="CPX-8221">
    <property type="entry name" value="CRL3 E3 ubiquitin ligase complex, KLHL35 variant"/>
</dbReference>
<dbReference type="ComplexPortal" id="CPX-8222">
    <property type="entry name" value="CRL3 E3 ubiquitin ligase complex, KLHL36 variant"/>
</dbReference>
<dbReference type="ComplexPortal" id="CPX-8241">
    <property type="entry name" value="CRL3 E3 ubiquitin ligase complex, ENC1 variant"/>
</dbReference>
<dbReference type="ComplexPortal" id="CPX-8242">
    <property type="entry name" value="CRL3 E3 ubiquitin ligase complex, KLHL38 variant"/>
</dbReference>
<dbReference type="ComplexPortal" id="CPX-8261">
    <property type="entry name" value="CRL3 E3 ubiquitin ligase complex, KLHL40 variant"/>
</dbReference>
<dbReference type="ComplexPortal" id="CPX-8262">
    <property type="entry name" value="CRL3 E3 ubiquitin ligase complex, KLHL41 variant"/>
</dbReference>
<dbReference type="ComplexPortal" id="CPX-8263">
    <property type="entry name" value="CRL3 E3 ubiquitin ligase complex, KLHL42 variant"/>
</dbReference>
<dbReference type="ComplexPortal" id="CPX-8916">
    <property type="entry name" value="CRL3 E3 ubiquitin ligase complex, SPOP-SPOPL variant"/>
</dbReference>
<dbReference type="ComplexPortal" id="CPX-8917">
    <property type="entry name" value="CRL3 E3 ubiquitin ligase complex, SPOPL variant"/>
</dbReference>
<dbReference type="ComplexPortal" id="CPX-8918">
    <property type="entry name" value="CRL3 E3 ubiquitin ligase complex, KBTBD2 variant"/>
</dbReference>
<dbReference type="ComplexPortal" id="CPX-8927">
    <property type="entry name" value="CRL3 E3 ubiquitin ligase complex, KBTBD4 variant"/>
</dbReference>
<dbReference type="ComplexPortal" id="CPX-8935">
    <property type="entry name" value="CRL3 E3 ubiquitin ligase complex, KBTBD6-KBTBD7 variant"/>
</dbReference>
<dbReference type="ComplexPortal" id="CPX-8941">
    <property type="entry name" value="CRL3 E3 ubiquitin ligase complex, KBTBD8 variant"/>
</dbReference>
<dbReference type="ComplexPortal" id="CPX-8942">
    <property type="entry name" value="CRL3 E3 ubiquitin ligase complex, KBTBD3 variant"/>
</dbReference>
<dbReference type="ComplexPortal" id="CPX-9081">
    <property type="entry name" value="CRL3 E3 ubiquitin ligase complex, KBTBD13 variant"/>
</dbReference>
<dbReference type="CORUM" id="P62877"/>
<dbReference type="DIP" id="DIP-17014N"/>
<dbReference type="FunCoup" id="P62877">
    <property type="interactions" value="2426"/>
</dbReference>
<dbReference type="IntAct" id="P62877">
    <property type="interactions" value="140"/>
</dbReference>
<dbReference type="MINT" id="P62877"/>
<dbReference type="STRING" id="9606.ENSP00000216225"/>
<dbReference type="BindingDB" id="P62877"/>
<dbReference type="ChEMBL" id="CHEMBL3833061"/>
<dbReference type="GlyGen" id="P62877">
    <property type="glycosylation" value="1 site, 1 O-linked glycan (1 site)"/>
</dbReference>
<dbReference type="iPTMnet" id="P62877"/>
<dbReference type="MetOSite" id="P62877"/>
<dbReference type="PhosphoSitePlus" id="P62877"/>
<dbReference type="SwissPalm" id="P62877"/>
<dbReference type="BioMuta" id="RBX1"/>
<dbReference type="DMDM" id="51338609"/>
<dbReference type="jPOST" id="P62877"/>
<dbReference type="MassIVE" id="P62877"/>
<dbReference type="PaxDb" id="9606-ENSP00000216225"/>
<dbReference type="PeptideAtlas" id="P62877"/>
<dbReference type="ProteomicsDB" id="57443"/>
<dbReference type="Pumba" id="P62877"/>
<dbReference type="TopDownProteomics" id="P62877"/>
<dbReference type="Antibodypedia" id="295">
    <property type="antibodies" value="345 antibodies from 41 providers"/>
</dbReference>
<dbReference type="DNASU" id="9978"/>
<dbReference type="Ensembl" id="ENST00000216225.9">
    <property type="protein sequence ID" value="ENSP00000216225.8"/>
    <property type="gene ID" value="ENSG00000100387.9"/>
</dbReference>
<dbReference type="GeneID" id="9978"/>
<dbReference type="KEGG" id="hsa:9978"/>
<dbReference type="MANE-Select" id="ENST00000216225.9">
    <property type="protein sequence ID" value="ENSP00000216225.8"/>
    <property type="RefSeq nucleotide sequence ID" value="NM_014248.4"/>
    <property type="RefSeq protein sequence ID" value="NP_055063.1"/>
</dbReference>
<dbReference type="UCSC" id="uc003azk.4">
    <property type="organism name" value="human"/>
</dbReference>
<dbReference type="AGR" id="HGNC:9928"/>
<dbReference type="CTD" id="9978"/>
<dbReference type="DisGeNET" id="9978"/>
<dbReference type="GeneCards" id="RBX1"/>
<dbReference type="HGNC" id="HGNC:9928">
    <property type="gene designation" value="RBX1"/>
</dbReference>
<dbReference type="HPA" id="ENSG00000100387">
    <property type="expression patterns" value="Low tissue specificity"/>
</dbReference>
<dbReference type="MIM" id="603814">
    <property type="type" value="gene"/>
</dbReference>
<dbReference type="neXtProt" id="NX_P62877"/>
<dbReference type="OpenTargets" id="ENSG00000100387"/>
<dbReference type="PharmGKB" id="PA34299"/>
<dbReference type="VEuPathDB" id="HostDB:ENSG00000100387"/>
<dbReference type="eggNOG" id="KOG2930">
    <property type="taxonomic scope" value="Eukaryota"/>
</dbReference>
<dbReference type="GeneTree" id="ENSGT00940000155618"/>
<dbReference type="HOGENOM" id="CLU_115512_2_1_1"/>
<dbReference type="InParanoid" id="P62877"/>
<dbReference type="OMA" id="NACPLDN"/>
<dbReference type="OrthoDB" id="8962942at2759"/>
<dbReference type="PAN-GO" id="P62877">
    <property type="GO annotations" value="6 GO annotations based on evolutionary models"/>
</dbReference>
<dbReference type="PhylomeDB" id="P62877"/>
<dbReference type="TreeFam" id="TF105503"/>
<dbReference type="BRENDA" id="2.3.2.27">
    <property type="organism ID" value="2681"/>
</dbReference>
<dbReference type="BRENDA" id="2.3.2.32">
    <property type="organism ID" value="2681"/>
</dbReference>
<dbReference type="PathwayCommons" id="P62877"/>
<dbReference type="Reactome" id="R-HSA-110314">
    <property type="pathway name" value="Recognition of DNA damage by PCNA-containing replication complex"/>
</dbReference>
<dbReference type="Reactome" id="R-HSA-1170546">
    <property type="pathway name" value="Prolactin receptor signaling"/>
</dbReference>
<dbReference type="Reactome" id="R-HSA-1234176">
    <property type="pathway name" value="Oxygen-dependent proline hydroxylation of Hypoxia-inducible Factor Alpha"/>
</dbReference>
<dbReference type="Reactome" id="R-HSA-180585">
    <property type="pathway name" value="Vif-mediated degradation of APOBEC3G"/>
</dbReference>
<dbReference type="Reactome" id="R-HSA-195253">
    <property type="pathway name" value="Degradation of beta-catenin by the destruction complex"/>
</dbReference>
<dbReference type="Reactome" id="R-HSA-2122947">
    <property type="pathway name" value="NOTCH1 Intracellular Domain Regulates Transcription"/>
</dbReference>
<dbReference type="Reactome" id="R-HSA-2644606">
    <property type="pathway name" value="Constitutive Signaling by NOTCH1 PEST Domain Mutants"/>
</dbReference>
<dbReference type="Reactome" id="R-HSA-2644607">
    <property type="pathway name" value="Loss of Function of FBXW7 in Cancer and NOTCH1 Signaling"/>
</dbReference>
<dbReference type="Reactome" id="R-HSA-2894862">
    <property type="pathway name" value="Constitutive Signaling by NOTCH1 HD+PEST Domain Mutants"/>
</dbReference>
<dbReference type="Reactome" id="R-HSA-4641258">
    <property type="pathway name" value="Degradation of DVL"/>
</dbReference>
<dbReference type="Reactome" id="R-HSA-5610780">
    <property type="pathway name" value="Degradation of GLI1 by the proteasome"/>
</dbReference>
<dbReference type="Reactome" id="R-HSA-5610783">
    <property type="pathway name" value="Degradation of GLI2 by the proteasome"/>
</dbReference>
<dbReference type="Reactome" id="R-HSA-5610785">
    <property type="pathway name" value="GLI3 is processed to GLI3R by the proteasome"/>
</dbReference>
<dbReference type="Reactome" id="R-HSA-5632684">
    <property type="pathway name" value="Hedgehog 'on' state"/>
</dbReference>
<dbReference type="Reactome" id="R-HSA-5658442">
    <property type="pathway name" value="Regulation of RAS by GAPs"/>
</dbReference>
<dbReference type="Reactome" id="R-HSA-5696394">
    <property type="pathway name" value="DNA Damage Recognition in GG-NER"/>
</dbReference>
<dbReference type="Reactome" id="R-HSA-5696395">
    <property type="pathway name" value="Formation of Incision Complex in GG-NER"/>
</dbReference>
<dbReference type="Reactome" id="R-HSA-5696400">
    <property type="pathway name" value="Dual Incision in GG-NER"/>
</dbReference>
<dbReference type="Reactome" id="R-HSA-6781823">
    <property type="pathway name" value="Formation of TC-NER Pre-Incision Complex"/>
</dbReference>
<dbReference type="Reactome" id="R-HSA-6781827">
    <property type="pathway name" value="Transcription-Coupled Nucleotide Excision Repair (TC-NER)"/>
</dbReference>
<dbReference type="Reactome" id="R-HSA-6782135">
    <property type="pathway name" value="Dual incision in TC-NER"/>
</dbReference>
<dbReference type="Reactome" id="R-HSA-6782210">
    <property type="pathway name" value="Gap-filling DNA repair synthesis and ligation in TC-NER"/>
</dbReference>
<dbReference type="Reactome" id="R-HSA-68949">
    <property type="pathway name" value="Orc1 removal from chromatin"/>
</dbReference>
<dbReference type="Reactome" id="R-HSA-8854050">
    <property type="pathway name" value="FBXL7 down-regulates AURKA during mitotic entry and in early mitosis"/>
</dbReference>
<dbReference type="Reactome" id="R-HSA-8939902">
    <property type="pathway name" value="Regulation of RUNX2 expression and activity"/>
</dbReference>
<dbReference type="Reactome" id="R-HSA-8951664">
    <property type="pathway name" value="Neddylation"/>
</dbReference>
<dbReference type="Reactome" id="R-HSA-9010553">
    <property type="pathway name" value="Regulation of expression of SLITs and ROBOs"/>
</dbReference>
<dbReference type="Reactome" id="R-HSA-9020702">
    <property type="pathway name" value="Interleukin-1 signaling"/>
</dbReference>
<dbReference type="Reactome" id="R-HSA-9604323">
    <property type="pathway name" value="Negative regulation of NOTCH4 signaling"/>
</dbReference>
<dbReference type="Reactome" id="R-HSA-9679191">
    <property type="pathway name" value="Potential therapeutics for SARS"/>
</dbReference>
<dbReference type="Reactome" id="R-HSA-9708530">
    <property type="pathway name" value="Regulation of BACH1 activity"/>
</dbReference>
<dbReference type="Reactome" id="R-HSA-9725371">
    <property type="pathway name" value="Nuclear events stimulated by ALK signaling in cancer"/>
</dbReference>
<dbReference type="Reactome" id="R-HSA-9755511">
    <property type="pathway name" value="KEAP1-NFE2L2 pathway"/>
</dbReference>
<dbReference type="Reactome" id="R-HSA-9762114">
    <property type="pathway name" value="GSK3B and BTRC:CUL1-mediated-degradation of NFE2L2"/>
</dbReference>
<dbReference type="Reactome" id="R-HSA-983168">
    <property type="pathway name" value="Antigen processing: Ubiquitination &amp; Proteasome degradation"/>
</dbReference>
<dbReference type="Reactome" id="R-HSA-9833109">
    <property type="pathway name" value="Evasion by RSV of host interferon responses"/>
</dbReference>
<dbReference type="SignaLink" id="P62877"/>
<dbReference type="SIGNOR" id="P62877"/>
<dbReference type="UniPathway" id="UPA00143"/>
<dbReference type="UniPathway" id="UPA00885"/>
<dbReference type="BioGRID-ORCS" id="9978">
    <property type="hits" value="663 hits in 1209 CRISPR screens"/>
</dbReference>
<dbReference type="CD-CODE" id="804901D1">
    <property type="entry name" value="Nuclear speckle"/>
</dbReference>
<dbReference type="CD-CODE" id="91857CE7">
    <property type="entry name" value="Nucleolus"/>
</dbReference>
<dbReference type="CD-CODE" id="FB4E32DD">
    <property type="entry name" value="Presynaptic clusters and postsynaptic densities"/>
</dbReference>
<dbReference type="ChiTaRS" id="RBX1">
    <property type="organism name" value="human"/>
</dbReference>
<dbReference type="EvolutionaryTrace" id="P62877"/>
<dbReference type="GeneWiki" id="RBX1"/>
<dbReference type="GenomeRNAi" id="9978"/>
<dbReference type="Pharos" id="P62877">
    <property type="development level" value="Tbio"/>
</dbReference>
<dbReference type="PRO" id="PR:P62877"/>
<dbReference type="Proteomes" id="UP000005640">
    <property type="component" value="Chromosome 22"/>
</dbReference>
<dbReference type="RNAct" id="P62877">
    <property type="molecule type" value="protein"/>
</dbReference>
<dbReference type="Bgee" id="ENSG00000100387">
    <property type="expression patterns" value="Expressed in periodontal ligament and 210 other cell types or tissues"/>
</dbReference>
<dbReference type="GO" id="GO:0031462">
    <property type="term" value="C:Cul2-RING ubiquitin ligase complex"/>
    <property type="evidence" value="ECO:0000314"/>
    <property type="project" value="UniProtKB"/>
</dbReference>
<dbReference type="GO" id="GO:0031463">
    <property type="term" value="C:Cul3-RING ubiquitin ligase complex"/>
    <property type="evidence" value="ECO:0000314"/>
    <property type="project" value="UniProtKB"/>
</dbReference>
<dbReference type="GO" id="GO:0080008">
    <property type="term" value="C:Cul4-RING E3 ubiquitin ligase complex"/>
    <property type="evidence" value="ECO:0000314"/>
    <property type="project" value="UniProtKB"/>
</dbReference>
<dbReference type="GO" id="GO:0031464">
    <property type="term" value="C:Cul4A-RING E3 ubiquitin ligase complex"/>
    <property type="evidence" value="ECO:0000314"/>
    <property type="project" value="UniProtKB"/>
</dbReference>
<dbReference type="GO" id="GO:0031465">
    <property type="term" value="C:Cul4B-RING E3 ubiquitin ligase complex"/>
    <property type="evidence" value="ECO:0000314"/>
    <property type="project" value="UniProtKB"/>
</dbReference>
<dbReference type="GO" id="GO:0031466">
    <property type="term" value="C:Cul5-RING ubiquitin ligase complex"/>
    <property type="evidence" value="ECO:0000314"/>
    <property type="project" value="UniProtKB"/>
</dbReference>
<dbReference type="GO" id="GO:0031467">
    <property type="term" value="C:Cul7-RING ubiquitin ligase complex"/>
    <property type="evidence" value="ECO:0000314"/>
    <property type="project" value="UniProtKB"/>
</dbReference>
<dbReference type="GO" id="GO:0031461">
    <property type="term" value="C:cullin-RING ubiquitin ligase complex"/>
    <property type="evidence" value="ECO:0000314"/>
    <property type="project" value="MGI"/>
</dbReference>
<dbReference type="GO" id="GO:0005737">
    <property type="term" value="C:cytoplasm"/>
    <property type="evidence" value="ECO:0000314"/>
    <property type="project" value="UniProt"/>
</dbReference>
<dbReference type="GO" id="GO:0005829">
    <property type="term" value="C:cytosol"/>
    <property type="evidence" value="ECO:0000250"/>
    <property type="project" value="UniProtKB"/>
</dbReference>
<dbReference type="GO" id="GO:0005654">
    <property type="term" value="C:nucleoplasm"/>
    <property type="evidence" value="ECO:0000314"/>
    <property type="project" value="HPA"/>
</dbReference>
<dbReference type="GO" id="GO:0005634">
    <property type="term" value="C:nucleus"/>
    <property type="evidence" value="ECO:0000314"/>
    <property type="project" value="UniProt"/>
</dbReference>
<dbReference type="GO" id="GO:0019005">
    <property type="term" value="C:SCF ubiquitin ligase complex"/>
    <property type="evidence" value="ECO:0000314"/>
    <property type="project" value="UniProtKB"/>
</dbReference>
<dbReference type="GO" id="GO:0030891">
    <property type="term" value="C:VCB complex"/>
    <property type="evidence" value="ECO:0007669"/>
    <property type="project" value="Ensembl"/>
</dbReference>
<dbReference type="GO" id="GO:0097602">
    <property type="term" value="F:cullin family protein binding"/>
    <property type="evidence" value="ECO:0000314"/>
    <property type="project" value="MGI"/>
</dbReference>
<dbReference type="GO" id="GO:0060090">
    <property type="term" value="F:molecular adaptor activity"/>
    <property type="evidence" value="ECO:0000269"/>
    <property type="project" value="DisProt"/>
</dbReference>
<dbReference type="GO" id="GO:0061663">
    <property type="term" value="F:NEDD8 ligase activity"/>
    <property type="evidence" value="ECO:0000314"/>
    <property type="project" value="UniProtKB"/>
</dbReference>
<dbReference type="GO" id="GO:0019788">
    <property type="term" value="F:NEDD8 transferase activity"/>
    <property type="evidence" value="ECO:0000304"/>
    <property type="project" value="Reactome"/>
</dbReference>
<dbReference type="GO" id="GO:0044877">
    <property type="term" value="F:protein-containing complex binding"/>
    <property type="evidence" value="ECO:0007669"/>
    <property type="project" value="Ensembl"/>
</dbReference>
<dbReference type="GO" id="GO:0061629">
    <property type="term" value="F:RNA polymerase II-specific DNA-binding transcription factor binding"/>
    <property type="evidence" value="ECO:0000353"/>
    <property type="project" value="UniProtKB"/>
</dbReference>
<dbReference type="GO" id="GO:0061630">
    <property type="term" value="F:ubiquitin protein ligase activity"/>
    <property type="evidence" value="ECO:0000314"/>
    <property type="project" value="UniProtKB"/>
</dbReference>
<dbReference type="GO" id="GO:0031625">
    <property type="term" value="F:ubiquitin protein ligase binding"/>
    <property type="evidence" value="ECO:0000314"/>
    <property type="project" value="UniProtKB"/>
</dbReference>
<dbReference type="GO" id="GO:0034450">
    <property type="term" value="F:ubiquitin-ubiquitin ligase activity"/>
    <property type="evidence" value="ECO:0000314"/>
    <property type="project" value="MGI"/>
</dbReference>
<dbReference type="GO" id="GO:0008270">
    <property type="term" value="F:zinc ion binding"/>
    <property type="evidence" value="ECO:0007669"/>
    <property type="project" value="UniProtKB-KW"/>
</dbReference>
<dbReference type="GO" id="GO:0071230">
    <property type="term" value="P:cellular response to amino acid stimulus"/>
    <property type="evidence" value="ECO:0000314"/>
    <property type="project" value="UniProt"/>
</dbReference>
<dbReference type="GO" id="GO:0062197">
    <property type="term" value="P:cellular response to chemical stress"/>
    <property type="evidence" value="ECO:0000304"/>
    <property type="project" value="Reactome"/>
</dbReference>
<dbReference type="GO" id="GO:0034599">
    <property type="term" value="P:cellular response to oxidative stress"/>
    <property type="evidence" value="ECO:0000314"/>
    <property type="project" value="UniProt"/>
</dbReference>
<dbReference type="GO" id="GO:0034644">
    <property type="term" value="P:cellular response to UV"/>
    <property type="evidence" value="ECO:0000269"/>
    <property type="project" value="ComplexPortal"/>
</dbReference>
<dbReference type="GO" id="GO:0006974">
    <property type="term" value="P:DNA damage response"/>
    <property type="evidence" value="ECO:0000269"/>
    <property type="project" value="ComplexPortal"/>
</dbReference>
<dbReference type="GO" id="GO:0000165">
    <property type="term" value="P:MAPK cascade"/>
    <property type="evidence" value="ECO:0000304"/>
    <property type="project" value="Reactome"/>
</dbReference>
<dbReference type="GO" id="GO:0090090">
    <property type="term" value="P:negative regulation of canonical Wnt signaling pathway"/>
    <property type="evidence" value="ECO:0000304"/>
    <property type="project" value="Reactome"/>
</dbReference>
<dbReference type="GO" id="GO:0046627">
    <property type="term" value="P:negative regulation of insulin receptor signaling pathway"/>
    <property type="evidence" value="ECO:0000314"/>
    <property type="project" value="UniProt"/>
</dbReference>
<dbReference type="GO" id="GO:1901525">
    <property type="term" value="P:negative regulation of mitophagy"/>
    <property type="evidence" value="ECO:0000305"/>
    <property type="project" value="UniProt"/>
</dbReference>
<dbReference type="GO" id="GO:1902883">
    <property type="term" value="P:negative regulation of response to oxidative stress"/>
    <property type="evidence" value="ECO:0000314"/>
    <property type="project" value="UniProt"/>
</dbReference>
<dbReference type="GO" id="GO:0032480">
    <property type="term" value="P:negative regulation of type I interferon production"/>
    <property type="evidence" value="ECO:0000314"/>
    <property type="project" value="UniProt"/>
</dbReference>
<dbReference type="GO" id="GO:0043123">
    <property type="term" value="P:positive regulation of canonical NF-kappaB signal transduction"/>
    <property type="evidence" value="ECO:0000314"/>
    <property type="project" value="UniProt"/>
</dbReference>
<dbReference type="GO" id="GO:0032436">
    <property type="term" value="P:positive regulation of proteasomal ubiquitin-dependent protein catabolic process"/>
    <property type="evidence" value="ECO:0000353"/>
    <property type="project" value="UniProtKB"/>
</dbReference>
<dbReference type="GO" id="GO:1902499">
    <property type="term" value="P:positive regulation of protein autoubiquitination"/>
    <property type="evidence" value="ECO:0000315"/>
    <property type="project" value="UniProtKB"/>
</dbReference>
<dbReference type="GO" id="GO:0045732">
    <property type="term" value="P:positive regulation of protein catabolic process"/>
    <property type="evidence" value="ECO:0000314"/>
    <property type="project" value="UniProt"/>
</dbReference>
<dbReference type="GO" id="GO:1904263">
    <property type="term" value="P:positive regulation of TORC1 signaling"/>
    <property type="evidence" value="ECO:0000314"/>
    <property type="project" value="UniProt"/>
</dbReference>
<dbReference type="GO" id="GO:0043687">
    <property type="term" value="P:post-translational protein modification"/>
    <property type="evidence" value="ECO:0000304"/>
    <property type="project" value="Reactome"/>
</dbReference>
<dbReference type="GO" id="GO:0043161">
    <property type="term" value="P:proteasome-mediated ubiquitin-dependent protein catabolic process"/>
    <property type="evidence" value="ECO:0000314"/>
    <property type="project" value="UniProtKB"/>
</dbReference>
<dbReference type="GO" id="GO:0070936">
    <property type="term" value="P:protein K48-linked ubiquitination"/>
    <property type="evidence" value="ECO:0000314"/>
    <property type="project" value="UniProtKB"/>
</dbReference>
<dbReference type="GO" id="GO:0006513">
    <property type="term" value="P:protein monoubiquitination"/>
    <property type="evidence" value="ECO:0000314"/>
    <property type="project" value="UniProtKB"/>
</dbReference>
<dbReference type="GO" id="GO:0045116">
    <property type="term" value="P:protein neddylation"/>
    <property type="evidence" value="ECO:0000314"/>
    <property type="project" value="UniProtKB"/>
</dbReference>
<dbReference type="GO" id="GO:0000209">
    <property type="term" value="P:protein polyubiquitination"/>
    <property type="evidence" value="ECO:0000314"/>
    <property type="project" value="UniProtKB"/>
</dbReference>
<dbReference type="GO" id="GO:0016567">
    <property type="term" value="P:protein ubiquitination"/>
    <property type="evidence" value="ECO:0000314"/>
    <property type="project" value="UniProtKB"/>
</dbReference>
<dbReference type="GO" id="GO:1900076">
    <property type="term" value="P:regulation of cellular response to insulin stimulus"/>
    <property type="evidence" value="ECO:0000305"/>
    <property type="project" value="UniProt"/>
</dbReference>
<dbReference type="GO" id="GO:0160240">
    <property type="term" value="P:RNA polymerase II transcription initiation surveillance"/>
    <property type="evidence" value="ECO:0000314"/>
    <property type="project" value="UniProtKB"/>
</dbReference>
<dbReference type="GO" id="GO:0031146">
    <property type="term" value="P:SCF-dependent proteasomal ubiquitin-dependent protein catabolic process"/>
    <property type="evidence" value="ECO:0000314"/>
    <property type="project" value="UniProtKB"/>
</dbReference>
<dbReference type="GO" id="GO:0007283">
    <property type="term" value="P:spermatogenesis"/>
    <property type="evidence" value="ECO:0000314"/>
    <property type="project" value="UniProt"/>
</dbReference>
<dbReference type="GO" id="GO:0042110">
    <property type="term" value="P:T cell activation"/>
    <property type="evidence" value="ECO:0000314"/>
    <property type="project" value="UniProt"/>
</dbReference>
<dbReference type="GO" id="GO:0006283">
    <property type="term" value="P:transcription-coupled nucleotide-excision repair"/>
    <property type="evidence" value="ECO:0000314"/>
    <property type="project" value="UniProtKB"/>
</dbReference>
<dbReference type="GO" id="GO:0006511">
    <property type="term" value="P:ubiquitin-dependent protein catabolic process"/>
    <property type="evidence" value="ECO:0000314"/>
    <property type="project" value="UniProt"/>
</dbReference>
<dbReference type="GO" id="GO:0140627">
    <property type="term" value="P:ubiquitin-dependent protein catabolic process via the C-end degron rule pathway"/>
    <property type="evidence" value="ECO:0000314"/>
    <property type="project" value="UniProt"/>
</dbReference>
<dbReference type="CDD" id="cd16485">
    <property type="entry name" value="mRING-H2-C3H2C2D_RBX1"/>
    <property type="match status" value="1"/>
</dbReference>
<dbReference type="DisProt" id="DP01750"/>
<dbReference type="FunFam" id="3.30.40.10:FF:000010">
    <property type="entry name" value="E3 ubiquitin-protein ligase RBX1"/>
    <property type="match status" value="1"/>
</dbReference>
<dbReference type="Gene3D" id="3.30.40.10">
    <property type="entry name" value="Zinc/RING finger domain, C3HC4 (zinc finger)"/>
    <property type="match status" value="1"/>
</dbReference>
<dbReference type="IDEAL" id="IID00059"/>
<dbReference type="InterPro" id="IPR051031">
    <property type="entry name" value="RING-box_E3_Ubiquitin_Ligase"/>
</dbReference>
<dbReference type="InterPro" id="IPR001841">
    <property type="entry name" value="Znf_RING"/>
</dbReference>
<dbReference type="InterPro" id="IPR013083">
    <property type="entry name" value="Znf_RING/FYVE/PHD"/>
</dbReference>
<dbReference type="InterPro" id="IPR024766">
    <property type="entry name" value="Znf_RING_H2"/>
</dbReference>
<dbReference type="PANTHER" id="PTHR11210">
    <property type="entry name" value="RING BOX"/>
    <property type="match status" value="1"/>
</dbReference>
<dbReference type="Pfam" id="PF12678">
    <property type="entry name" value="zf-rbx1"/>
    <property type="match status" value="1"/>
</dbReference>
<dbReference type="SUPFAM" id="SSF57850">
    <property type="entry name" value="RING/U-box"/>
    <property type="match status" value="1"/>
</dbReference>
<dbReference type="PROSITE" id="PS50089">
    <property type="entry name" value="ZF_RING_2"/>
    <property type="match status" value="1"/>
</dbReference>
<comment type="function">
    <text evidence="5 6 7 10 15 16 17 18 20 22 23 25 27 32 34 35 36 37 40 42 43 44 45 46">E3 ubiquitin ligase component of multiple cullin-RING-based E3 ubiquitin-protein ligase (CRLs) complexes which mediate the ubiquitination and subsequent proteasomal degradation of target proteins, including proteins involved in cell cycle progression, signal transduction, transcription and transcription-coupled nucleotide excision repair (PubMed:10230407, PubMed:10579999, PubMed:11961546, PubMed:15983046, PubMed:16678110, PubMed:19112177, PubMed:19679664, PubMed:22748924, PubMed:23455478, PubMed:27565346, PubMed:29769719, PubMed:32355176, PubMed:33417871, PubMed:38326650, PubMed:39504960, PubMed:39667934, PubMed:38316879). CRLs complexes and ARIH1 collaborate in tandem to mediate ubiquitination of target proteins, ARIH1 mediating addition of the first ubiquitin on CRLs targets (PubMed:27565346). The functional specificity of the E3 ubiquitin-protein ligase complexes depends on the variable substrate recognition components. As a component of the CSA complex mediates ubiquitination of Pol II subunit POLR2A at 'Lys-1268', a critical TC-NER checkpoint (PubMed:32355176, PubMed:34526721). Core component of the Cul7-RING(FBXW8) ubiquitin ligase complex, which mediates the ubiquitination and subsequent proteasomal degradation of target proteins (PubMed:35982156). Core component of a Cul9-RING ubiquitin ligase complex composed of CUL9 and RBX1, which mediates mono-ubiquitination of p53/TP53 (PubMed:38605244). Recruits the E2 ubiquitin-conjugating enzyme CDC34 to the complex and brings it into close proximity to the substrate. Probably also stimulates CDC34 autoubiquitination. May be required for histone H3 and histone H4 ubiquitination in response to ultraviolet and for subsequent DNA repair. Promotes the neddylation of CUL1, CUL2, CUL4 and CUL4 via its interaction with UBE2M. Involved in the ubiquitination of KEAP1, ENC1 and KLHL41. In concert with ATF2 and CUL3, promotes degradation of KAT5 thereby attenuating its ability to acetylate and activate ATM. As part of a multisubunit complex composed of elongin BC complex (ELOB and ELOC), elongin A/ELOA, RBX1 and CUL5; polyubiquitinates monoubiquitinated POLR2A (PubMed:19920177).</text>
</comment>
<comment type="catalytic activity">
    <reaction evidence="7 43">
        <text>S-ubiquitinyl-[E2 ubiquitin-conjugating enzyme]-L-cysteine + [acceptor protein]-L-lysine = [E2 ubiquitin-conjugating enzyme]-L-cysteine + N(6)-ubiquitinyl-[acceptor protein]-L-lysine.</text>
        <dbReference type="EC" id="2.3.2.27"/>
    </reaction>
</comment>
<comment type="catalytic activity">
    <reaction evidence="7">
        <text>S-[NEDD8-protein]-yl-[E2 NEDD8-conjugating enzyme]-L-cysteine + [cullin]-L-lysine = [E2 NEDD8-conjugating enzyme]-L-cysteine + N(6)-[NEDD8-protein]-yl-[cullin]-L-lysine.</text>
        <dbReference type="EC" id="2.3.2.32"/>
    </reaction>
</comment>
<comment type="pathway">
    <text evidence="5 7 25 43 44 45 46">Protein modification; protein ubiquitination.</text>
</comment>
<comment type="pathway">
    <text evidence="7">Protein modification; protein neddylation.</text>
</comment>
<comment type="subunit">
    <text evidence="1 3 4 5 8 9 10 11 12 13 14 15 16 19 20 21 24 25 26 27 28 29 30 31 33 35 36 38 39 40 41 42 43 44 45 46 47">Component of multiple Cul1-RING E3 ubiquitin-protein ligase complexes commonly known as SCF (SKP1-CUL1-F-box) complexes, consisting of CUL1, SKP1, RBX1 and a variable F-box domain-containing protein (PubMed:10230406, PubMed:11961546, PubMed:20596027, PubMed:22748924, PubMed:38326650, PubMed:39880951). Part of a SCF(SKP2) complex consisting of CUL1, RBX1, SKP1 and SKP2 (PubMed:10230406, PubMed:11961546). Part of a SCF(FBXO3) complex consisting of CUL1, FBXO3, RBX1 and SKP1; this complex interacts with PML via FBXO3 (PubMed:18809579). Component of the SCF(Cyclin F) complex consisting of CUL1, RBX1, SKP1 and CCNF (PubMed:20596027). Identified in a SCF E3 ubiquitin ligase complex together with HINT1 and CDC34 (PubMed:19112177). Component of multiple Cul2-RING (CRL2) E3 ubiquitin-protein ligase complexes consisting of CUL2, Elongin BC (ELOB and ELOC), RBX1 and a variable substrate-specific adapter; this complex is also known as ECS (Elongin BC-CUL2/5-SOCS-box protein) complex and may consists of CUL2 or CUL5 (PubMed:11384984, PubMed:38326650). Component of the CRL2(LRR1) complex with the substrate recognition component LRR1 (PubMed:34700328). Part of the ECS(VHL) or CBC(VHL) complex composed of CUL2 or CUL5, RBX1, ELOB, ELOC and VHL (PubMed:10213691, PubMed:38326650). Part of the CRL2 complex with elongin BC complex (ELOB and ELOC), CUL2 and MED8; and part of the CRL5 complex with elongin BC complex (ELOB and ELOC), CUL5 and MUF1 (PubMed:11384984, PubMed:12149480). Component of multiple BCR (BTB-CUL3-RBX1) or Cul3-RING E3 ubiquitin-protein ligase complexes formed of CUL3, RBX1 and a variable BTB domain-containing protein (PubMed:15983046). Part of the BCR(ENC1) complex containing ENC1 (PubMed:15983046). Part of the BCR(GAN) complex containing GAN (PubMed:15983046). Part of the BCR(KLHL41) complex containing KLHL41 (PubMed:15983046). Part of the BCR(KEAP1) complex containing KEAP1 (PubMed:15983046). Component of the BCR(KLHL22) E3 ubiquitin ligase complex, at least composed of CUL3, KLHL22 and RBX1 (PubMed:23455478). Component of the BCR(KBTBD4) E3 ubiquitin ligase complex, at least composed of CUL3, KBTBD4 and RBX1 (PubMed:33417871). Component of a BCR(KBTBD6/7) complex, composed of CUL3, RBX1, KBTBD6 and KBTBD7 (PubMed:25684205). Component of the BCR(ARMC5) E3 ubiquitin ligase complex, composed of CUL3, ARMC5 and RBX1 (PubMed:35687106, PubMed:38225631, PubMed:39504960, PubMed:39667934). Component of Cul4-RING E3 ubiquitin-protein ligase complex, known as the CSA complex or DCX(ERCC8) complex, containing CUL4A, ERCC8, RBX1 and DDB1; the CSA complex interacts with RNA polymerase II; upon UV irradiation it interacts with the COP9 signalosome and preferentially with the hyperphosphorylated form of RNA polymerase II (PubMed:12732143, PubMed:32355176, PubMed:38316879). Component of the DCX DET1-COP1 ubiquitin ligase complex at least composed of CUL4A, RBX1, DET1, DDB1, and COP1 (PubMed:14739464). Part of an E3 ligase complex composed of CUL4A or CUL4B, RBX1, DDB1 and DDB2 (PubMed:16678110). Component of a Cul5-RING (CRL5) ubiquitin ligase complex consisting of CUL5, ELOB, ELOC, elongin A/ELOA, and RBX1 (PubMed:19920177). Part of CRL5 ubiquitin ligase complex with CUL5, ELOB, ELOC, SOCS1 or WSB1. Component of the Cul7-RING(FBXW8) complex consisting of CUL7, RBX1, SKP1 and FBXW8; within the complex interacts with CUL7 (PubMed:12481031, PubMed:35982156). Component of the Cul9-RING complex consisting of CUL9 and RBX1; the CUL9-RBX1 complex is a heterododecamer composed of six CUL9 and six RBX1 protomers (PubMed:38605244). Interacts directly with CUL1, CUL2, CUL7 and CUL9; probably also with CUL3, CUL4A, CUL4B and CUL5 (PubMed:10230407, PubMed:12481031, PubMed:35982156, PubMed:38605244, PubMed:38326650). Interacts with CDC34 (PubMed:22748924). Interacts with GLMN; GLMN competes for the binding site of the E2 ubiquitin-conjugating enzyme CDC34 and disrupts CDC34 binding (PubMed:22748924). Interacts with COPS6 (PubMed:11337588). Interacts with UBE2M (PubMed:19250909). Interacts with SESN1 and SESN2 (PubMed:23274085). Interacts with NOTCH2 (PubMed:29149593). Interacts with DCUN1D1, DCUN1D2, DCUN1D3, DCUN1D4 and DCUN1D5 (PubMed:24192928, PubMed:25349211, PubMed:26906416). Interacts with CAND1 (By similarity).</text>
</comment>
<comment type="subunit">
    <text evidence="22">(Microbial infection) Interacts with human adenovirus 5 protein E1A; this interaction inhibits RBX1-CUL1-dependent elongation reaction of ubiquitin chains by the SCF(FBW7) complex.</text>
</comment>
<comment type="interaction">
    <interactant intactId="EBI-398523">
        <id>P62877</id>
    </interactant>
    <interactant intactId="EBI-359390">
        <id>Q13616</id>
        <label>CUL1</label>
    </interactant>
    <organismsDiffer>false</organismsDiffer>
    <experiments>31</experiments>
</comment>
<comment type="interaction">
    <interactant intactId="EBI-398523">
        <id>P62877</id>
    </interactant>
    <interactant intactId="EBI-456179">
        <id>Q13617</id>
        <label>CUL2</label>
    </interactant>
    <organismsDiffer>false</organismsDiffer>
    <experiments>9</experiments>
</comment>
<comment type="interaction">
    <interactant intactId="EBI-398523">
        <id>P62877</id>
    </interactant>
    <interactant intactId="EBI-456129">
        <id>Q13618</id>
        <label>CUL3</label>
    </interactant>
    <organismsDiffer>false</organismsDiffer>
    <experiments>7</experiments>
</comment>
<comment type="interaction">
    <interactant intactId="EBI-398523">
        <id>P62877</id>
    </interactant>
    <interactant intactId="EBI-456067">
        <id>Q13620</id>
        <label>CUL4B</label>
    </interactant>
    <organismsDiffer>false</organismsDiffer>
    <experiments>8</experiments>
</comment>
<comment type="interaction">
    <interactant intactId="EBI-398523">
        <id>P62877</id>
    </interactant>
    <interactant intactId="EBI-1057139">
        <id>Q93034</id>
        <label>CUL5</label>
    </interactant>
    <organismsDiffer>false</organismsDiffer>
    <experiments>3</experiments>
</comment>
<comment type="interaction">
    <interactant intactId="EBI-398523">
        <id>P62877</id>
    </interactant>
    <interactant intactId="EBI-726150">
        <id>Q92990</id>
        <label>GLMN</label>
    </interactant>
    <organismsDiffer>false</organismsDiffer>
    <experiments>7</experiments>
</comment>
<comment type="interaction">
    <interactant intactId="EBI-398523">
        <id>P62877</id>
    </interactant>
    <interactant intactId="EBI-10176379">
        <id>P59991</id>
        <label>KRTAP12-2</label>
    </interactant>
    <organismsDiffer>false</organismsDiffer>
    <experiments>3</experiments>
</comment>
<comment type="interaction">
    <interactant intactId="EBI-398523">
        <id>P62877</id>
    </interactant>
    <interactant intactId="EBI-10302990">
        <id>Q9BYU1</id>
        <label>PBX4</label>
    </interactant>
    <organismsDiffer>false</organismsDiffer>
    <experiments>3</experiments>
</comment>
<comment type="interaction">
    <interactant intactId="EBI-398523">
        <id>P62877</id>
    </interactant>
    <interactant intactId="EBI-3939642">
        <id>P58004</id>
        <label>SESN2</label>
    </interactant>
    <organismsDiffer>false</organismsDiffer>
    <experiments>3</experiments>
</comment>
<comment type="interaction">
    <interactant intactId="EBI-398523">
        <id>P62877</id>
    </interactant>
    <interactant intactId="EBI-456291">
        <id>Q13309</id>
        <label>SKP2</label>
    </interactant>
    <organismsDiffer>false</organismsDiffer>
    <experiments>4</experiments>
</comment>
<comment type="interaction">
    <interactant intactId="EBI-398523">
        <id>P62877</id>
    </interactant>
    <interactant intactId="EBI-1041660">
        <id>P61081</id>
        <label>UBE2M</label>
    </interactant>
    <organismsDiffer>false</organismsDiffer>
    <experiments>7</experiments>
</comment>
<comment type="subcellular location">
    <subcellularLocation>
        <location evidence="7">Cytoplasm</location>
    </subcellularLocation>
    <subcellularLocation>
        <location evidence="7">Nucleus</location>
    </subcellularLocation>
</comment>
<comment type="tissue specificity">
    <text>Widely expressed.</text>
</comment>
<comment type="domain">
    <text evidence="5 10 25">The RING-type zinc finger domain is essential for ubiquitin ligase activity (PubMed:10230407). It coordinates an additional third zinc ion (PubMed:11961546, PubMed:22748924).</text>
</comment>
<comment type="similarity">
    <text evidence="50">Belongs to the RING-box family.</text>
</comment>
<comment type="sequence caution" evidence="50">
    <conflict type="erroneous initiation">
        <sequence resource="EMBL-CDS" id="AAH17370"/>
    </conflict>
    <text>Extended N-terminus.</text>
</comment>
<comment type="online information" name="Atlas of Genetics and Cytogenetics in Oncology and Haematology">
    <link uri="https://atlasgeneticsoncology.org/gene/42075/RBX1"/>
</comment>
<evidence type="ECO:0000250" key="1">
    <source>
        <dbReference type="UniProtKB" id="P62878"/>
    </source>
</evidence>
<evidence type="ECO:0000255" key="2">
    <source>
        <dbReference type="PROSITE-ProRule" id="PRU00175"/>
    </source>
</evidence>
<evidence type="ECO:0000269" key="3">
    <source>
    </source>
</evidence>
<evidence type="ECO:0000269" key="4">
    <source>
    </source>
</evidence>
<evidence type="ECO:0000269" key="5">
    <source>
    </source>
</evidence>
<evidence type="ECO:0000269" key="6">
    <source>
    </source>
</evidence>
<evidence type="ECO:0000269" key="7">
    <source>
    </source>
</evidence>
<evidence type="ECO:0000269" key="8">
    <source>
    </source>
</evidence>
<evidence type="ECO:0000269" key="9">
    <source>
    </source>
</evidence>
<evidence type="ECO:0000269" key="10">
    <source>
    </source>
</evidence>
<evidence type="ECO:0000269" key="11">
    <source>
    </source>
</evidence>
<evidence type="ECO:0000269" key="12">
    <source>
    </source>
</evidence>
<evidence type="ECO:0000269" key="13">
    <source>
    </source>
</evidence>
<evidence type="ECO:0000269" key="14">
    <source>
    </source>
</evidence>
<evidence type="ECO:0000269" key="15">
    <source>
    </source>
</evidence>
<evidence type="ECO:0000269" key="16">
    <source>
    </source>
</evidence>
<evidence type="ECO:0000269" key="17">
    <source>
    </source>
</evidence>
<evidence type="ECO:0000269" key="18">
    <source>
    </source>
</evidence>
<evidence type="ECO:0000269" key="19">
    <source>
    </source>
</evidence>
<evidence type="ECO:0000269" key="20">
    <source>
    </source>
</evidence>
<evidence type="ECO:0000269" key="21">
    <source>
    </source>
</evidence>
<evidence type="ECO:0000269" key="22">
    <source>
    </source>
</evidence>
<evidence type="ECO:0000269" key="23">
    <source>
    </source>
</evidence>
<evidence type="ECO:0000269" key="24">
    <source>
    </source>
</evidence>
<evidence type="ECO:0000269" key="25">
    <source>
    </source>
</evidence>
<evidence type="ECO:0000269" key="26">
    <source>
    </source>
</evidence>
<evidence type="ECO:0000269" key="27">
    <source>
    </source>
</evidence>
<evidence type="ECO:0000269" key="28">
    <source>
    </source>
</evidence>
<evidence type="ECO:0000269" key="29">
    <source>
    </source>
</evidence>
<evidence type="ECO:0000269" key="30">
    <source>
    </source>
</evidence>
<evidence type="ECO:0000269" key="31">
    <source>
    </source>
</evidence>
<evidence type="ECO:0000269" key="32">
    <source>
    </source>
</evidence>
<evidence type="ECO:0000269" key="33">
    <source>
    </source>
</evidence>
<evidence type="ECO:0000269" key="34">
    <source>
    </source>
</evidence>
<evidence type="ECO:0000269" key="35">
    <source>
    </source>
</evidence>
<evidence type="ECO:0000269" key="36">
    <source>
    </source>
</evidence>
<evidence type="ECO:0000269" key="37">
    <source>
    </source>
</evidence>
<evidence type="ECO:0000269" key="38">
    <source>
    </source>
</evidence>
<evidence type="ECO:0000269" key="39">
    <source>
    </source>
</evidence>
<evidence type="ECO:0000269" key="40">
    <source>
    </source>
</evidence>
<evidence type="ECO:0000269" key="41">
    <source>
    </source>
</evidence>
<evidence type="ECO:0000269" key="42">
    <source>
    </source>
</evidence>
<evidence type="ECO:0000269" key="43">
    <source>
    </source>
</evidence>
<evidence type="ECO:0000269" key="44">
    <source>
    </source>
</evidence>
<evidence type="ECO:0000269" key="45">
    <source>
    </source>
</evidence>
<evidence type="ECO:0000269" key="46">
    <source>
    </source>
</evidence>
<evidence type="ECO:0000269" key="47">
    <source>
    </source>
</evidence>
<evidence type="ECO:0000269" key="48">
    <source ref="8"/>
</evidence>
<evidence type="ECO:0000303" key="49">
    <source>
    </source>
</evidence>
<evidence type="ECO:0000305" key="50"/>
<evidence type="ECO:0000312" key="51">
    <source>
        <dbReference type="HGNC" id="HGNC:9928"/>
    </source>
</evidence>
<evidence type="ECO:0007744" key="52">
    <source>
        <dbReference type="PDB" id="1LDJ"/>
    </source>
</evidence>
<evidence type="ECO:0007744" key="53">
    <source>
        <dbReference type="PDB" id="1LDK"/>
    </source>
</evidence>
<evidence type="ECO:0007744" key="54">
    <source>
        <dbReference type="PDB" id="1U6G"/>
    </source>
</evidence>
<evidence type="ECO:0007744" key="55">
    <source>
        <dbReference type="PDB" id="2HYE"/>
    </source>
</evidence>
<evidence type="ECO:0007744" key="56">
    <source>
        <dbReference type="PDB" id="3DPL"/>
    </source>
</evidence>
<evidence type="ECO:0007744" key="57">
    <source>
        <dbReference type="PDB" id="3DQV"/>
    </source>
</evidence>
<evidence type="ECO:0007744" key="58">
    <source>
        <dbReference type="PDB" id="3RTR"/>
    </source>
</evidence>
<evidence type="ECO:0007744" key="59">
    <source>
        <dbReference type="PDB" id="4F52"/>
    </source>
</evidence>
<evidence type="ECO:0007744" key="60">
    <source>
        <dbReference type="PDB" id="4P5O"/>
    </source>
</evidence>
<evidence type="ECO:0007744" key="61">
    <source>
        <dbReference type="PDB" id="7PLO"/>
    </source>
</evidence>
<evidence type="ECO:0007744" key="62">
    <source>
        <dbReference type="PDB" id="7Z8B"/>
    </source>
</evidence>
<evidence type="ECO:0007744" key="63">
    <source>
        <dbReference type="PDB" id="8B3G"/>
    </source>
</evidence>
<evidence type="ECO:0007744" key="64">
    <source>
        <dbReference type="PDB" id="8B3I"/>
    </source>
</evidence>
<evidence type="ECO:0007744" key="65">
    <source>
        <dbReference type="PDB" id="8PQL"/>
    </source>
</evidence>
<evidence type="ECO:0007744" key="66">
    <source>
        <dbReference type="PDB" id="8Q7E"/>
    </source>
</evidence>
<evidence type="ECO:0007744" key="67">
    <source>
        <dbReference type="PDB" id="8Q7H"/>
    </source>
</evidence>
<evidence type="ECO:0007744" key="68">
    <source>
        <dbReference type="PDB" id="8RHZ"/>
    </source>
</evidence>
<evidence type="ECO:0007744" key="69">
    <source>
    </source>
</evidence>
<evidence type="ECO:0007744" key="70">
    <source>
    </source>
</evidence>
<evidence type="ECO:0007744" key="71">
    <source>
    </source>
</evidence>
<evidence type="ECO:0007744" key="72">
    <source>
    </source>
</evidence>
<evidence type="ECO:0007744" key="73">
    <source>
    </source>
</evidence>
<evidence type="ECO:0007829" key="74">
    <source>
        <dbReference type="PDB" id="1LDJ"/>
    </source>
</evidence>
<evidence type="ECO:0007829" key="75">
    <source>
        <dbReference type="PDB" id="1LDK"/>
    </source>
</evidence>
<evidence type="ECO:0007829" key="76">
    <source>
        <dbReference type="PDB" id="3DPL"/>
    </source>
</evidence>
<evidence type="ECO:0007829" key="77">
    <source>
        <dbReference type="PDB" id="7Z8B"/>
    </source>
</evidence>
<evidence type="ECO:0007829" key="78">
    <source>
        <dbReference type="PDB" id="7Z8R"/>
    </source>
</evidence>
<evidence type="ECO:0007829" key="79">
    <source>
        <dbReference type="PDB" id="8OR2"/>
    </source>
</evidence>
<keyword id="KW-0002">3D-structure</keyword>
<keyword id="KW-0007">Acetylation</keyword>
<keyword id="KW-0963">Cytoplasm</keyword>
<keyword id="KW-0903">Direct protein sequencing</keyword>
<keyword id="KW-0227">DNA damage</keyword>
<keyword id="KW-0234">DNA repair</keyword>
<keyword id="KW-0945">Host-virus interaction</keyword>
<keyword id="KW-0479">Metal-binding</keyword>
<keyword id="KW-0539">Nucleus</keyword>
<keyword id="KW-0597">Phosphoprotein</keyword>
<keyword id="KW-1267">Proteomics identification</keyword>
<keyword id="KW-1185">Reference proteome</keyword>
<keyword id="KW-0808">Transferase</keyword>
<keyword id="KW-0833">Ubl conjugation pathway</keyword>
<keyword id="KW-0862">Zinc</keyword>
<keyword id="KW-0863">Zinc-finger</keyword>
<organism>
    <name type="scientific">Homo sapiens</name>
    <name type="common">Human</name>
    <dbReference type="NCBI Taxonomy" id="9606"/>
    <lineage>
        <taxon>Eukaryota</taxon>
        <taxon>Metazoa</taxon>
        <taxon>Chordata</taxon>
        <taxon>Craniata</taxon>
        <taxon>Vertebrata</taxon>
        <taxon>Euteleostomi</taxon>
        <taxon>Mammalia</taxon>
        <taxon>Eutheria</taxon>
        <taxon>Euarchontoglires</taxon>
        <taxon>Primates</taxon>
        <taxon>Haplorrhini</taxon>
        <taxon>Catarrhini</taxon>
        <taxon>Hominidae</taxon>
        <taxon>Homo</taxon>
    </lineage>
</organism>
<reference key="1">
    <citation type="journal article" date="1999" name="Mol. Cell">
        <title>ROC1, a homolog of APC11, represents a family of cullin partners with an associated ubiquitin ligase activity.</title>
        <authorList>
            <person name="Ohta T."/>
            <person name="Michel J.J."/>
            <person name="Schottelius A.J."/>
            <person name="Xiong Y."/>
        </authorList>
    </citation>
    <scope>NUCLEOTIDE SEQUENCE [MRNA]</scope>
    <scope>FUNCTION</scope>
    <scope>PATHWAY</scope>
    <scope>INTERACTION WITH CULLINS</scope>
    <scope>DOMAIN</scope>
    <scope>MUTAGENESIS OF CYS-53; CYS-56; CYS-75 AND HIS-77</scope>
    <source>
        <tissue>Cervix carcinoma</tissue>
    </source>
</reference>
<reference key="2">
    <citation type="journal article" date="1999" name="Science">
        <title>Rbx1, a component of the VHL tumor suppressor complex and SCF ubiquitin ligase.</title>
        <authorList>
            <person name="Kamura T."/>
            <person name="Koepp D.M."/>
            <person name="Conrad M.N."/>
            <person name="Skowyra D."/>
            <person name="Moreland R.J."/>
            <person name="Iliopoulos O."/>
            <person name="Lane W.S."/>
            <person name="Kaelin W.G. Jr."/>
            <person name="Elledge S.J."/>
            <person name="Conaway R.C."/>
            <person name="Harper J.W."/>
            <person name="Conaway J.W."/>
        </authorList>
    </citation>
    <scope>NUCLEOTIDE SEQUENCE [MRNA]</scope>
    <scope>IDENTIFICATION IN CBC(VHL) COMPLEX</scope>
</reference>
<reference key="3">
    <citation type="journal article" date="2004" name="Genome Biol.">
        <title>A genome annotation-driven approach to cloning the human ORFeome.</title>
        <authorList>
            <person name="Collins J.E."/>
            <person name="Wright C.L."/>
            <person name="Edwards C.A."/>
            <person name="Davis M.P."/>
            <person name="Grinham J.A."/>
            <person name="Cole C.G."/>
            <person name="Goward M.E."/>
            <person name="Aguado B."/>
            <person name="Mallya M."/>
            <person name="Mokrab Y."/>
            <person name="Huckle E.J."/>
            <person name="Beare D.M."/>
            <person name="Dunham I."/>
        </authorList>
    </citation>
    <scope>NUCLEOTIDE SEQUENCE [LARGE SCALE MRNA]</scope>
</reference>
<reference key="4">
    <citation type="journal article" date="2004" name="Nat. Genet.">
        <title>Complete sequencing and characterization of 21,243 full-length human cDNAs.</title>
        <authorList>
            <person name="Ota T."/>
            <person name="Suzuki Y."/>
            <person name="Nishikawa T."/>
            <person name="Otsuki T."/>
            <person name="Sugiyama T."/>
            <person name="Irie R."/>
            <person name="Wakamatsu A."/>
            <person name="Hayashi K."/>
            <person name="Sato H."/>
            <person name="Nagai K."/>
            <person name="Kimura K."/>
            <person name="Makita H."/>
            <person name="Sekine M."/>
            <person name="Obayashi M."/>
            <person name="Nishi T."/>
            <person name="Shibahara T."/>
            <person name="Tanaka T."/>
            <person name="Ishii S."/>
            <person name="Yamamoto J."/>
            <person name="Saito K."/>
            <person name="Kawai Y."/>
            <person name="Isono Y."/>
            <person name="Nakamura Y."/>
            <person name="Nagahari K."/>
            <person name="Murakami K."/>
            <person name="Yasuda T."/>
            <person name="Iwayanagi T."/>
            <person name="Wagatsuma M."/>
            <person name="Shiratori A."/>
            <person name="Sudo H."/>
            <person name="Hosoiri T."/>
            <person name="Kaku Y."/>
            <person name="Kodaira H."/>
            <person name="Kondo H."/>
            <person name="Sugawara M."/>
            <person name="Takahashi M."/>
            <person name="Kanda K."/>
            <person name="Yokoi T."/>
            <person name="Furuya T."/>
            <person name="Kikkawa E."/>
            <person name="Omura Y."/>
            <person name="Abe K."/>
            <person name="Kamihara K."/>
            <person name="Katsuta N."/>
            <person name="Sato K."/>
            <person name="Tanikawa M."/>
            <person name="Yamazaki M."/>
            <person name="Ninomiya K."/>
            <person name="Ishibashi T."/>
            <person name="Yamashita H."/>
            <person name="Murakawa K."/>
            <person name="Fujimori K."/>
            <person name="Tanai H."/>
            <person name="Kimata M."/>
            <person name="Watanabe M."/>
            <person name="Hiraoka S."/>
            <person name="Chiba Y."/>
            <person name="Ishida S."/>
            <person name="Ono Y."/>
            <person name="Takiguchi S."/>
            <person name="Watanabe S."/>
            <person name="Yosida M."/>
            <person name="Hotuta T."/>
            <person name="Kusano J."/>
            <person name="Kanehori K."/>
            <person name="Takahashi-Fujii A."/>
            <person name="Hara H."/>
            <person name="Tanase T.-O."/>
            <person name="Nomura Y."/>
            <person name="Togiya S."/>
            <person name="Komai F."/>
            <person name="Hara R."/>
            <person name="Takeuchi K."/>
            <person name="Arita M."/>
            <person name="Imose N."/>
            <person name="Musashino K."/>
            <person name="Yuuki H."/>
            <person name="Oshima A."/>
            <person name="Sasaki N."/>
            <person name="Aotsuka S."/>
            <person name="Yoshikawa Y."/>
            <person name="Matsunawa H."/>
            <person name="Ichihara T."/>
            <person name="Shiohata N."/>
            <person name="Sano S."/>
            <person name="Moriya S."/>
            <person name="Momiyama H."/>
            <person name="Satoh N."/>
            <person name="Takami S."/>
            <person name="Terashima Y."/>
            <person name="Suzuki O."/>
            <person name="Nakagawa S."/>
            <person name="Senoh A."/>
            <person name="Mizoguchi H."/>
            <person name="Goto Y."/>
            <person name="Shimizu F."/>
            <person name="Wakebe H."/>
            <person name="Hishigaki H."/>
            <person name="Watanabe T."/>
            <person name="Sugiyama A."/>
            <person name="Takemoto M."/>
            <person name="Kawakami B."/>
            <person name="Yamazaki M."/>
            <person name="Watanabe K."/>
            <person name="Kumagai A."/>
            <person name="Itakura S."/>
            <person name="Fukuzumi Y."/>
            <person name="Fujimori Y."/>
            <person name="Komiyama M."/>
            <person name="Tashiro H."/>
            <person name="Tanigami A."/>
            <person name="Fujiwara T."/>
            <person name="Ono T."/>
            <person name="Yamada K."/>
            <person name="Fujii Y."/>
            <person name="Ozaki K."/>
            <person name="Hirao M."/>
            <person name="Ohmori Y."/>
            <person name="Kawabata A."/>
            <person name="Hikiji T."/>
            <person name="Kobatake N."/>
            <person name="Inagaki H."/>
            <person name="Ikema Y."/>
            <person name="Okamoto S."/>
            <person name="Okitani R."/>
            <person name="Kawakami T."/>
            <person name="Noguchi S."/>
            <person name="Itoh T."/>
            <person name="Shigeta K."/>
            <person name="Senba T."/>
            <person name="Matsumura K."/>
            <person name="Nakajima Y."/>
            <person name="Mizuno T."/>
            <person name="Morinaga M."/>
            <person name="Sasaki M."/>
            <person name="Togashi T."/>
            <person name="Oyama M."/>
            <person name="Hata H."/>
            <person name="Watanabe M."/>
            <person name="Komatsu T."/>
            <person name="Mizushima-Sugano J."/>
            <person name="Satoh T."/>
            <person name="Shirai Y."/>
            <person name="Takahashi Y."/>
            <person name="Nakagawa K."/>
            <person name="Okumura K."/>
            <person name="Nagase T."/>
            <person name="Nomura N."/>
            <person name="Kikuchi H."/>
            <person name="Masuho Y."/>
            <person name="Yamashita R."/>
            <person name="Nakai K."/>
            <person name="Yada T."/>
            <person name="Nakamura Y."/>
            <person name="Ohara O."/>
            <person name="Isogai T."/>
            <person name="Sugano S."/>
        </authorList>
    </citation>
    <scope>NUCLEOTIDE SEQUENCE [LARGE SCALE MRNA]</scope>
    <source>
        <tissue>Testis</tissue>
    </source>
</reference>
<reference key="5">
    <citation type="journal article" date="1999" name="Nature">
        <title>The DNA sequence of human chromosome 22.</title>
        <authorList>
            <person name="Dunham I."/>
            <person name="Hunt A.R."/>
            <person name="Collins J.E."/>
            <person name="Bruskiewich R."/>
            <person name="Beare D.M."/>
            <person name="Clamp M."/>
            <person name="Smink L.J."/>
            <person name="Ainscough R."/>
            <person name="Almeida J.P."/>
            <person name="Babbage A.K."/>
            <person name="Bagguley C."/>
            <person name="Bailey J."/>
            <person name="Barlow K.F."/>
            <person name="Bates K.N."/>
            <person name="Beasley O.P."/>
            <person name="Bird C.P."/>
            <person name="Blakey S.E."/>
            <person name="Bridgeman A.M."/>
            <person name="Buck D."/>
            <person name="Burgess J."/>
            <person name="Burrill W.D."/>
            <person name="Burton J."/>
            <person name="Carder C."/>
            <person name="Carter N.P."/>
            <person name="Chen Y."/>
            <person name="Clark G."/>
            <person name="Clegg S.M."/>
            <person name="Cobley V.E."/>
            <person name="Cole C.G."/>
            <person name="Collier R.E."/>
            <person name="Connor R."/>
            <person name="Conroy D."/>
            <person name="Corby N.R."/>
            <person name="Coville G.J."/>
            <person name="Cox A.V."/>
            <person name="Davis J."/>
            <person name="Dawson E."/>
            <person name="Dhami P.D."/>
            <person name="Dockree C."/>
            <person name="Dodsworth S.J."/>
            <person name="Durbin R.M."/>
            <person name="Ellington A.G."/>
            <person name="Evans K.L."/>
            <person name="Fey J.M."/>
            <person name="Fleming K."/>
            <person name="French L."/>
            <person name="Garner A.A."/>
            <person name="Gilbert J.G.R."/>
            <person name="Goward M.E."/>
            <person name="Grafham D.V."/>
            <person name="Griffiths M.N.D."/>
            <person name="Hall C."/>
            <person name="Hall R.E."/>
            <person name="Hall-Tamlyn G."/>
            <person name="Heathcott R.W."/>
            <person name="Ho S."/>
            <person name="Holmes S."/>
            <person name="Hunt S.E."/>
            <person name="Jones M.C."/>
            <person name="Kershaw J."/>
            <person name="Kimberley A.M."/>
            <person name="King A."/>
            <person name="Laird G.K."/>
            <person name="Langford C.F."/>
            <person name="Leversha M.A."/>
            <person name="Lloyd C."/>
            <person name="Lloyd D.M."/>
            <person name="Martyn I.D."/>
            <person name="Mashreghi-Mohammadi M."/>
            <person name="Matthews L.H."/>
            <person name="Mccann O.T."/>
            <person name="Mcclay J."/>
            <person name="Mclaren S."/>
            <person name="McMurray A.A."/>
            <person name="Milne S.A."/>
            <person name="Mortimore B.J."/>
            <person name="Odell C.N."/>
            <person name="Pavitt R."/>
            <person name="Pearce A.V."/>
            <person name="Pearson D."/>
            <person name="Phillimore B.J.C.T."/>
            <person name="Phillips S.H."/>
            <person name="Plumb R.W."/>
            <person name="Ramsay H."/>
            <person name="Ramsey Y."/>
            <person name="Rogers L."/>
            <person name="Ross M.T."/>
            <person name="Scott C.E."/>
            <person name="Sehra H.K."/>
            <person name="Skuce C.D."/>
            <person name="Smalley S."/>
            <person name="Smith M.L."/>
            <person name="Soderlund C."/>
            <person name="Spragon L."/>
            <person name="Steward C.A."/>
            <person name="Sulston J.E."/>
            <person name="Swann R.M."/>
            <person name="Vaudin M."/>
            <person name="Wall M."/>
            <person name="Wallis J.M."/>
            <person name="Whiteley M.N."/>
            <person name="Willey D.L."/>
            <person name="Williams L."/>
            <person name="Williams S.A."/>
            <person name="Williamson H."/>
            <person name="Wilmer T.E."/>
            <person name="Wilming L."/>
            <person name="Wright C.L."/>
            <person name="Hubbard T."/>
            <person name="Bentley D.R."/>
            <person name="Beck S."/>
            <person name="Rogers J."/>
            <person name="Shimizu N."/>
            <person name="Minoshima S."/>
            <person name="Kawasaki K."/>
            <person name="Sasaki T."/>
            <person name="Asakawa S."/>
            <person name="Kudoh J."/>
            <person name="Shintani A."/>
            <person name="Shibuya K."/>
            <person name="Yoshizaki Y."/>
            <person name="Aoki N."/>
            <person name="Mitsuyama S."/>
            <person name="Roe B.A."/>
            <person name="Chen F."/>
            <person name="Chu L."/>
            <person name="Crabtree J."/>
            <person name="Deschamps S."/>
            <person name="Do A."/>
            <person name="Do T."/>
            <person name="Dorman A."/>
            <person name="Fang F."/>
            <person name="Fu Y."/>
            <person name="Hu P."/>
            <person name="Hua A."/>
            <person name="Kenton S."/>
            <person name="Lai H."/>
            <person name="Lao H.I."/>
            <person name="Lewis J."/>
            <person name="Lewis S."/>
            <person name="Lin S.-P."/>
            <person name="Loh P."/>
            <person name="Malaj E."/>
            <person name="Nguyen T."/>
            <person name="Pan H."/>
            <person name="Phan S."/>
            <person name="Qi S."/>
            <person name="Qian Y."/>
            <person name="Ray L."/>
            <person name="Ren Q."/>
            <person name="Shaull S."/>
            <person name="Sloan D."/>
            <person name="Song L."/>
            <person name="Wang Q."/>
            <person name="Wang Y."/>
            <person name="Wang Z."/>
            <person name="White J."/>
            <person name="Willingham D."/>
            <person name="Wu H."/>
            <person name="Yao Z."/>
            <person name="Zhan M."/>
            <person name="Zhang G."/>
            <person name="Chissoe S."/>
            <person name="Murray J."/>
            <person name="Miller N."/>
            <person name="Minx P."/>
            <person name="Fulton R."/>
            <person name="Johnson D."/>
            <person name="Bemis G."/>
            <person name="Bentley D."/>
            <person name="Bradshaw H."/>
            <person name="Bourne S."/>
            <person name="Cordes M."/>
            <person name="Du Z."/>
            <person name="Fulton L."/>
            <person name="Goela D."/>
            <person name="Graves T."/>
            <person name="Hawkins J."/>
            <person name="Hinds K."/>
            <person name="Kemp K."/>
            <person name="Latreille P."/>
            <person name="Layman D."/>
            <person name="Ozersky P."/>
            <person name="Rohlfing T."/>
            <person name="Scheet P."/>
            <person name="Walker C."/>
            <person name="Wamsley A."/>
            <person name="Wohldmann P."/>
            <person name="Pepin K."/>
            <person name="Nelson J."/>
            <person name="Korf I."/>
            <person name="Bedell J.A."/>
            <person name="Hillier L.W."/>
            <person name="Mardis E."/>
            <person name="Waterston R."/>
            <person name="Wilson R."/>
            <person name="Emanuel B.S."/>
            <person name="Shaikh T."/>
            <person name="Kurahashi H."/>
            <person name="Saitta S."/>
            <person name="Budarf M.L."/>
            <person name="McDermid H.E."/>
            <person name="Johnson A."/>
            <person name="Wong A.C.C."/>
            <person name="Morrow B.E."/>
            <person name="Edelmann L."/>
            <person name="Kim U.J."/>
            <person name="Shizuya H."/>
            <person name="Simon M.I."/>
            <person name="Dumanski J.P."/>
            <person name="Peyrard M."/>
            <person name="Kedra D."/>
            <person name="Seroussi E."/>
            <person name="Fransson I."/>
            <person name="Tapia I."/>
            <person name="Bruder C.E."/>
            <person name="O'Brien K.P."/>
            <person name="Wilkinson P."/>
            <person name="Bodenteich A."/>
            <person name="Hartman K."/>
            <person name="Hu X."/>
            <person name="Khan A.S."/>
            <person name="Lane L."/>
            <person name="Tilahun Y."/>
            <person name="Wright H."/>
        </authorList>
    </citation>
    <scope>NUCLEOTIDE SEQUENCE [LARGE SCALE GENOMIC DNA]</scope>
</reference>
<reference key="6">
    <citation type="submission" date="2005-07" db="EMBL/GenBank/DDBJ databases">
        <authorList>
            <person name="Mural R.J."/>
            <person name="Istrail S."/>
            <person name="Sutton G.G."/>
            <person name="Florea L."/>
            <person name="Halpern A.L."/>
            <person name="Mobarry C.M."/>
            <person name="Lippert R."/>
            <person name="Walenz B."/>
            <person name="Shatkay H."/>
            <person name="Dew I."/>
            <person name="Miller J.R."/>
            <person name="Flanigan M.J."/>
            <person name="Edwards N.J."/>
            <person name="Bolanos R."/>
            <person name="Fasulo D."/>
            <person name="Halldorsson B.V."/>
            <person name="Hannenhalli S."/>
            <person name="Turner R."/>
            <person name="Yooseph S."/>
            <person name="Lu F."/>
            <person name="Nusskern D.R."/>
            <person name="Shue B.C."/>
            <person name="Zheng X.H."/>
            <person name="Zhong F."/>
            <person name="Delcher A.L."/>
            <person name="Huson D.H."/>
            <person name="Kravitz S.A."/>
            <person name="Mouchard L."/>
            <person name="Reinert K."/>
            <person name="Remington K.A."/>
            <person name="Clark A.G."/>
            <person name="Waterman M.S."/>
            <person name="Eichler E.E."/>
            <person name="Adams M.D."/>
            <person name="Hunkapiller M.W."/>
            <person name="Myers E.W."/>
            <person name="Venter J.C."/>
        </authorList>
    </citation>
    <scope>NUCLEOTIDE SEQUENCE [LARGE SCALE GENOMIC DNA]</scope>
</reference>
<reference key="7">
    <citation type="journal article" date="2004" name="Genome Res.">
        <title>The status, quality, and expansion of the NIH full-length cDNA project: the Mammalian Gene Collection (MGC).</title>
        <authorList>
            <consortium name="The MGC Project Team"/>
        </authorList>
    </citation>
    <scope>NUCLEOTIDE SEQUENCE [LARGE SCALE MRNA]</scope>
    <source>
        <tissue>Brain</tissue>
        <tissue>Placenta</tissue>
    </source>
</reference>
<reference key="8">
    <citation type="submission" date="2008-03" db="UniProtKB">
        <authorList>
            <person name="Bienvenut W.V."/>
            <person name="Vousden K.H."/>
            <person name="Lukashchuk N."/>
        </authorList>
    </citation>
    <scope>PROTEIN SEQUENCE OF 2-20</scope>
    <scope>CLEAVAGE OF INITIATOR METHIONINE</scope>
    <scope>ACETYLATION AT ALA-2</scope>
    <scope>IDENTIFICATION BY MASS SPECTROMETRY</scope>
    <source>
        <tissue>Lung carcinoma</tissue>
    </source>
</reference>
<reference key="9">
    <citation type="journal article" date="1999" name="Cell. Mol. Biol.">
        <title>Genomic organization and expression of the ubiquitin-proteasome complex-associated protein Rbx1/ROC1/Hrt1.</title>
        <authorList>
            <person name="Perin J.-P."/>
            <person name="Seddiqi N."/>
            <person name="Charbonnier F."/>
            <person name="Goudou D."/>
            <person name="Belkadi L."/>
            <person name="Rieger F."/>
            <person name="Alliel P.M."/>
        </authorList>
    </citation>
    <scope>NUCLEOTIDE SEQUENCE [GENOMIC DNA] OF 14-108</scope>
    <source>
        <tissue>Brain</tissue>
    </source>
</reference>
<reference key="10">
    <citation type="journal article" date="1999" name="Mol. Cell">
        <title>Recruitment of a ROC1-CUL1 ubiquitin ligase by Skp1 and HOS to catalyze the ubiquitination of I kappa B alpha.</title>
        <authorList>
            <person name="Tan P."/>
            <person name="Fuchs S.Y."/>
            <person name="Chen A."/>
            <person name="Wu K."/>
            <person name="Gomez C."/>
            <person name="Ronai Z."/>
            <person name="Pan Z.-Q."/>
        </authorList>
    </citation>
    <scope>PROTEIN SEQUENCE OF 92-105</scope>
    <scope>INTERACTION WITH CUL1</scope>
    <scope>IDENTIFICATION IN A COMPLEX WITH CUL1; SKP1 AND SKP2</scope>
    <source>
        <tissue>Cervix carcinoma</tissue>
    </source>
</reference>
<reference key="11">
    <citation type="journal article" date="1999" name="Genes Dev.">
        <title>The Rbx1 subunit of SCF and VHL E3 ubiquitin ligase activates Rub1 modification of cullins Cdc53 and Cul2.</title>
        <authorList>
            <person name="Kamura T."/>
            <person name="Conrad M.N."/>
            <person name="Yan Q."/>
            <person name="Conaway R.C."/>
            <person name="Conaway J.W."/>
        </authorList>
    </citation>
    <scope>FUNCTION</scope>
</reference>
<reference key="12">
    <citation type="journal article" date="2000" name="Mol. Cell. Biol.">
        <title>The CUL1 C-terminal sequence and ROC1 are required for efficient nuclear accumulation, NEDD8 modification, and ubiquitin ligase activity of CUL1.</title>
        <authorList>
            <person name="Furukawa M."/>
            <person name="Zhang Y."/>
            <person name="McCarville J."/>
            <person name="Ohta T."/>
            <person name="Xiong Y."/>
        </authorList>
    </citation>
    <scope>FUNCTION</scope>
    <scope>CATALYTIC ACTIVITY</scope>
    <scope>SUBCELLULAR LOCATION</scope>
    <scope>PATHWAY</scope>
</reference>
<reference key="13">
    <citation type="journal article" date="2001" name="J. Biol. Chem.">
        <title>Muf1, a novel elongin BC-interacting leucine-rich repeat protein that can assemble with Cul5 and Rbx1 to reconstitute a ubiquitin ligase.</title>
        <authorList>
            <person name="Kamura T."/>
            <person name="Burian D."/>
            <person name="Yan Q."/>
            <person name="Schmidt S.L."/>
            <person name="Lane W.S."/>
            <person name="Querido E."/>
            <person name="Branton P.E."/>
            <person name="Shilatifard A."/>
            <person name="Conaway R.C."/>
            <person name="Conaway J.W."/>
        </authorList>
    </citation>
    <scope>IDENTIFICATION IN E3 UBIQUITIN-PROTEIN LIGASE COMPLEX WITH MUF1</scope>
    <scope>IDENTIFICATION IN COMPLEXES WITH CUL5</scope>
</reference>
<reference key="14">
    <citation type="journal article" date="2001" name="Science">
        <title>Promotion of NEDD-CUL1 conjugate cleavage by COP9 signalosome.</title>
        <authorList>
            <person name="Lyapina S."/>
            <person name="Cope G."/>
            <person name="Shevchenko A."/>
            <person name="Serino G."/>
            <person name="Tsuge T."/>
            <person name="Zhou C."/>
            <person name="Wolf D.A."/>
            <person name="Wei N."/>
            <person name="Shevchenko A."/>
            <person name="Deshaies R.J."/>
        </authorList>
    </citation>
    <scope>INTERACTION WITH COPS6</scope>
</reference>
<reference key="15">
    <citation type="journal article" date="2002" name="Proc. Natl. Acad. Sci. U.S.A.">
        <title>Mammalian mediator subunit mMED8 is an Elongin BC-interacting protein that can assemble with Cul2 and Rbx1 to reconstitute a ubiquitin ligase.</title>
        <authorList>
            <person name="Brower C.S."/>
            <person name="Sato S."/>
            <person name="Tomomori-Sato C."/>
            <person name="Kamura T."/>
            <person name="Pause A."/>
            <person name="Stearman R."/>
            <person name="Klausner R.D."/>
            <person name="Malik S."/>
            <person name="Lane W.S."/>
            <person name="Sorokina I."/>
            <person name="Roeder R.G."/>
            <person name="Conaway J.W."/>
            <person name="Conaway R.C."/>
        </authorList>
    </citation>
    <scope>IDENTIFICATION IN E3 UBIQUITIN-PROTEIN LIGASE COMPLEX WITH MED8</scope>
</reference>
<reference key="16">
    <citation type="journal article" date="2002" name="Proc. Natl. Acad. Sci. U.S.A.">
        <title>CUL7: a DOC domain-containing cullin selectively binds Skp1.Fbx29 to form an SCF-like complex.</title>
        <authorList>
            <person name="Dias D.C."/>
            <person name="Dolios G."/>
            <person name="Wang R."/>
            <person name="Pan Z.Q."/>
        </authorList>
    </citation>
    <scope>IDENTIFICATION IN CUL7-RING(FBXW8) COMPLEX</scope>
    <scope>INTERACTION WITH CUL7</scope>
</reference>
<reference key="17">
    <citation type="journal article" date="2003" name="Cell">
        <title>The ubiquitin ligase activity in the DDB2 and CSA complexes is differentially regulated by the COP9 signalosome in response to DNA damage.</title>
        <authorList>
            <person name="Groisman R."/>
            <person name="Polanowska J."/>
            <person name="Kuraoka I."/>
            <person name="Sawada J."/>
            <person name="Saijo M."/>
            <person name="Drapkin R."/>
            <person name="Kisselev A.F."/>
            <person name="Tanaka K."/>
            <person name="Nakatani Y."/>
        </authorList>
    </citation>
    <scope>IDENTIFICATION IN THE CSA COMPLEX WITH ERCC8; DDB1 AND CUL4A</scope>
    <scope>INTERACTION OF THE CSA COMPLEX WITH RNA POLYMERASE II AND THE COP9 SIGNALOSOME</scope>
</reference>
<reference key="18">
    <citation type="journal article" date="2004" name="Science">
        <title>Human De-etiolated-1 regulates c-Jun by assembling a CUL4A ubiquitin ligase.</title>
        <authorList>
            <person name="Wertz I.E."/>
            <person name="O'Rourke K.M."/>
            <person name="Zhang Z."/>
            <person name="Dornan D."/>
            <person name="Arnott D."/>
            <person name="Deshaies R.J."/>
            <person name="Dixit V.M."/>
        </authorList>
    </citation>
    <scope>IDENTIFICATION IN THE DCX DET1-COP1 COMPLEX WITH DDB1; CUL4A; COP1 AND DET1</scope>
</reference>
<reference key="19">
    <citation type="journal article" date="2005" name="J. Biol. Chem.">
        <title>Ubiquitination of Keap1, a BTB-Kelch substrate adaptor protein for Cul3, targets Keap1 for degradation by a proteasome-independent pathway.</title>
        <authorList>
            <person name="Zhang D.D."/>
            <person name="Lo S.C."/>
            <person name="Sun Z."/>
            <person name="Habib G.M."/>
            <person name="Lieberman M.W."/>
            <person name="Hannink M."/>
        </authorList>
    </citation>
    <scope>FUNCTION</scope>
    <scope>IDENTIFICATION IN THE BCR(KLHL41) COMPLEX</scope>
    <scope>IDENTIFICATION IN THE BCR(ENC1) COMPLEX</scope>
    <scope>IDENTIFICATION IN THE BCR(KEAP1) COMPLEX</scope>
    <scope>IDENTIFICATION IN THE BCR(GAN) COMPLEX</scope>
</reference>
<reference key="20">
    <citation type="journal article" date="2006" name="Genes Dev.">
        <title>CSA-dependent degradation of CSB by the ubiquitin-proteasome pathway establishes a link between complementation factors of the Cockayne syndrome.</title>
        <authorList>
            <person name="Groisman R."/>
            <person name="Kuraoka I."/>
            <person name="Chevallier O."/>
            <person name="Gaye N."/>
            <person name="Magnaldo T."/>
            <person name="Tanaka K."/>
            <person name="Kisselev A.F."/>
            <person name="Harel-Bellan A."/>
            <person name="Nakatani Y."/>
        </authorList>
    </citation>
    <scope>FUNCTION</scope>
</reference>
<reference key="21">
    <citation type="journal article" date="2006" name="Mol. Cell">
        <title>Histone H3 and H4 ubiquitylation by the CUL4-DDB-ROC1 ubiquitin ligase facilitates cellular response to DNA damage.</title>
        <authorList>
            <person name="Wang H."/>
            <person name="Zhai L."/>
            <person name="Xu J."/>
            <person name="Joo H.-Y."/>
            <person name="Jackson S."/>
            <person name="Erdjument-Bromage H."/>
            <person name="Tempst P."/>
            <person name="Xiong Y."/>
            <person name="Zhang Y."/>
        </authorList>
    </citation>
    <scope>IDENTIFICATION IN COMPLEX WITH DDB1; DDB2; CUL4A AND CUL4B</scope>
    <scope>IDENTIFICATION BY MASS SPECTROMETRY</scope>
    <scope>FUNCTION</scope>
</reference>
<reference key="22">
    <citation type="journal article" date="2008" name="J. Biol. Chem.">
        <title>Regulation of TIP60 by ATF2 modulates ATM activation.</title>
        <authorList>
            <person name="Bhoumik A."/>
            <person name="Singha N."/>
            <person name="O'Connell M.J."/>
            <person name="Ronai Z.A."/>
        </authorList>
    </citation>
    <scope>FUNCTION</scope>
</reference>
<reference key="23">
    <citation type="journal article" date="2008" name="Mol. Cell">
        <title>Kinase-selective enrichment enables quantitative phosphoproteomics of the kinome across the cell cycle.</title>
        <authorList>
            <person name="Daub H."/>
            <person name="Olsen J.V."/>
            <person name="Bairlein M."/>
            <person name="Gnad F."/>
            <person name="Oppermann F.S."/>
            <person name="Korner R."/>
            <person name="Greff Z."/>
            <person name="Keri G."/>
            <person name="Stemmann O."/>
            <person name="Mann M."/>
        </authorList>
    </citation>
    <scope>IDENTIFICATION BY MASS SPECTROMETRY [LARGE SCALE ANALYSIS]</scope>
    <source>
        <tissue>Cervix carcinoma</tissue>
    </source>
</reference>
<reference key="24">
    <citation type="journal article" date="2008" name="Mol. Cell. Biol.">
        <title>PML activates transcription by protecting HIPK2 and p300 from SCFFbx3-mediated degradation.</title>
        <authorList>
            <person name="Shima Y."/>
            <person name="Shima T."/>
            <person name="Chiba T."/>
            <person name="Irimura T."/>
            <person name="Pandolfi P.P."/>
            <person name="Kitabayashi I."/>
        </authorList>
    </citation>
    <scope>INTERACTION WITH CUL1; FBXO3; SKP1 AND PML</scope>
</reference>
<reference key="25">
    <citation type="journal article" date="2009" name="Anal. Chem.">
        <title>Lys-N and trypsin cover complementary parts of the phosphoproteome in a refined SCX-based approach.</title>
        <authorList>
            <person name="Gauci S."/>
            <person name="Helbig A.O."/>
            <person name="Slijper M."/>
            <person name="Krijgsveld J."/>
            <person name="Heck A.J."/>
            <person name="Mohammed S."/>
        </authorList>
    </citation>
    <scope>ACETYLATION [LARGE SCALE ANALYSIS] AT ALA-2</scope>
    <scope>CLEAVAGE OF INITIATOR METHIONINE [LARGE SCALE ANALYSIS]</scope>
    <scope>IDENTIFICATION BY MASS SPECTROMETRY [LARGE SCALE ANALYSIS]</scope>
</reference>
<reference key="26">
    <citation type="journal article" date="2009" name="J. Biol. Chem.">
        <title>Histidine triad nucleotide-binding protein 1 up-regulates cellular levels of p27KIP1 by targeting ScfSKP2 ubiquitin ligase and Src.</title>
        <authorList>
            <person name="Cen B."/>
            <person name="Li H."/>
            <person name="Weinstein I.B."/>
        </authorList>
    </citation>
    <scope>IDENTIFICATION IN A UBIQUITIN LIGASE COMPLEX WITH HINT1 AND CDC34</scope>
    <scope>FUNCTION</scope>
</reference>
<reference key="27">
    <citation type="journal article" date="2009" name="Mol. Cell">
        <title>E2-RING expansion of the NEDD8 cascade confers specificity to cullin modification.</title>
        <authorList>
            <person name="Huang D.T."/>
            <person name="Ayrault O."/>
            <person name="Hunt H.W."/>
            <person name="Taherbhoy A.M."/>
            <person name="Duda D.M."/>
            <person name="Scott D.C."/>
            <person name="Borg L.A."/>
            <person name="Neale G."/>
            <person name="Murray P.J."/>
            <person name="Roussel M.F."/>
            <person name="Schulman B.A."/>
        </authorList>
    </citation>
    <scope>INTERACTION WITH UBE2M</scope>
</reference>
<reference key="28">
    <citation type="journal article" date="2009" name="J. Biol. Chem.">
        <title>Adenovirus E1A inhibits SCF(Fbw7) ubiquitin ligase.</title>
        <authorList>
            <person name="Isobe T."/>
            <person name="Hattori T."/>
            <person name="Kitagawa K."/>
            <person name="Uchida C."/>
            <person name="Kotake Y."/>
            <person name="Kosugi I."/>
            <person name="Oda T."/>
            <person name="Kitagawa M."/>
        </authorList>
    </citation>
    <scope>FUNCTION</scope>
    <scope>INTERACTION WITH HADV5 E1A (MICROBIAL INFECTION)</scope>
</reference>
<reference key="29">
    <citation type="journal article" date="2009" name="Proc. Natl. Acad. Sci. U.S.A.">
        <title>Distinct ubiquitin ligases act sequentially for RNA polymerase II polyubiquitylation.</title>
        <authorList>
            <person name="Harreman M."/>
            <person name="Taschner M."/>
            <person name="Sigurdsson S."/>
            <person name="Anindya R."/>
            <person name="Reid J."/>
            <person name="Somesh B."/>
            <person name="Kong S.E."/>
            <person name="Banks C.A."/>
            <person name="Conaway R.C."/>
            <person name="Conaway J.W."/>
            <person name="Svejstrup J.Q."/>
        </authorList>
    </citation>
    <scope>FUNCTION</scope>
    <scope>IDENTIFICATION IN A UBIQUITIN LIGASE COMPLEX WITH ELONGIN BC; ELONGIN A/ELOA AND CUL5</scope>
</reference>
<reference key="30">
    <citation type="journal article" date="2010" name="Nature">
        <title>SCF(Cyclin F) controls centrosome homeostasis and mitotic fidelity through CP110 degradation.</title>
        <authorList>
            <person name="D'Angiolella V."/>
            <person name="Donato V."/>
            <person name="Vijayakumar S."/>
            <person name="Saraf A."/>
            <person name="Florens L."/>
            <person name="Washburn M.P."/>
            <person name="Dynlacht B."/>
            <person name="Pagano M."/>
        </authorList>
    </citation>
    <scope>IDENTIFICATION IN THE SCF(CYCLIN F) COMPLEX</scope>
</reference>
<reference key="31">
    <citation type="journal article" date="2010" name="Sci. Signal.">
        <title>Quantitative phosphoproteomics reveals widespread full phosphorylation site occupancy during mitosis.</title>
        <authorList>
            <person name="Olsen J.V."/>
            <person name="Vermeulen M."/>
            <person name="Santamaria A."/>
            <person name="Kumar C."/>
            <person name="Miller M.L."/>
            <person name="Jensen L.J."/>
            <person name="Gnad F."/>
            <person name="Cox J."/>
            <person name="Jensen T.S."/>
            <person name="Nigg E.A."/>
            <person name="Brunak S."/>
            <person name="Mann M."/>
        </authorList>
    </citation>
    <scope>ACETYLATION [LARGE SCALE ANALYSIS] AT MET-1 AND ALA-2</scope>
    <scope>PHOSPHORYLATION [LARGE SCALE ANALYSIS] AT THR-9</scope>
    <scope>CLEAVAGE OF INITIATOR METHIONINE [LARGE SCALE ANALYSIS]</scope>
    <scope>IDENTIFICATION BY MASS SPECTROMETRY [LARGE SCALE ANALYSIS]</scope>
    <source>
        <tissue>Cervix carcinoma</tissue>
    </source>
</reference>
<reference key="32">
    <citation type="journal article" date="2011" name="BMC Syst. Biol.">
        <title>Initial characterization of the human central proteome.</title>
        <authorList>
            <person name="Burkard T.R."/>
            <person name="Planyavsky M."/>
            <person name="Kaupe I."/>
            <person name="Breitwieser F.P."/>
            <person name="Buerckstuemmer T."/>
            <person name="Bennett K.L."/>
            <person name="Superti-Furga G."/>
            <person name="Colinge J."/>
        </authorList>
    </citation>
    <scope>IDENTIFICATION BY MASS SPECTROMETRY [LARGE SCALE ANALYSIS]</scope>
</reference>
<reference key="33">
    <citation type="journal article" date="2012" name="Mol. Cell. Proteomics">
        <title>Comparative large-scale characterisation of plant vs. mammal proteins reveals similar and idiosyncratic N-alpha acetylation features.</title>
        <authorList>
            <person name="Bienvenut W.V."/>
            <person name="Sumpton D."/>
            <person name="Martinez A."/>
            <person name="Lilla S."/>
            <person name="Espagne C."/>
            <person name="Meinnel T."/>
            <person name="Giglione C."/>
        </authorList>
    </citation>
    <scope>ACETYLATION [LARGE SCALE ANALYSIS] AT ALA-2</scope>
    <scope>CLEAVAGE OF INITIATOR METHIONINE [LARGE SCALE ANALYSIS]</scope>
    <scope>IDENTIFICATION BY MASS SPECTROMETRY [LARGE SCALE ANALYSIS]</scope>
</reference>
<reference key="34">
    <citation type="journal article" date="2012" name="Proc. Natl. Acad. Sci. U.S.A.">
        <title>N-terminal acetylome analyses and functional insights of the N-terminal acetyltransferase NatB.</title>
        <authorList>
            <person name="Van Damme P."/>
            <person name="Lasa M."/>
            <person name="Polevoda B."/>
            <person name="Gazquez C."/>
            <person name="Elosegui-Artola A."/>
            <person name="Kim D.S."/>
            <person name="De Juan-Pardo E."/>
            <person name="Demeyer K."/>
            <person name="Hole K."/>
            <person name="Larrea E."/>
            <person name="Timmerman E."/>
            <person name="Prieto J."/>
            <person name="Arnesen T."/>
            <person name="Sherman F."/>
            <person name="Gevaert K."/>
            <person name="Aldabe R."/>
        </authorList>
    </citation>
    <scope>ACETYLATION [LARGE SCALE ANALYSIS] AT ALA-2</scope>
    <scope>CLEAVAGE OF INITIATOR METHIONINE [LARGE SCALE ANALYSIS]</scope>
    <scope>IDENTIFICATION BY MASS SPECTROMETRY [LARGE SCALE ANALYSIS]</scope>
</reference>
<reference key="35">
    <citation type="journal article" date="2013" name="Cell Metab.">
        <title>Sestrins activate Nrf2 by promoting p62-dependent autophagic degradation of Keap1 and prevent oxidative liver damage.</title>
        <authorList>
            <person name="Bae S.H."/>
            <person name="Sung S.H."/>
            <person name="Oh S.Y."/>
            <person name="Lim J.M."/>
            <person name="Lee S.K."/>
            <person name="Park Y.N."/>
            <person name="Lee H.E."/>
            <person name="Kang D."/>
            <person name="Rhee S.G."/>
        </authorList>
    </citation>
    <scope>INTERACTION WITH SESN1 AND SESN2</scope>
</reference>
<reference key="36">
    <citation type="journal article" date="2013" name="J. Proteome Res.">
        <title>Toward a comprehensive characterization of a human cancer cell phosphoproteome.</title>
        <authorList>
            <person name="Zhou H."/>
            <person name="Di Palma S."/>
            <person name="Preisinger C."/>
            <person name="Peng M."/>
            <person name="Polat A.N."/>
            <person name="Heck A.J."/>
            <person name="Mohammed S."/>
        </authorList>
    </citation>
    <scope>PHOSPHORYLATION [LARGE SCALE ANALYSIS] AT THR-9</scope>
    <scope>IDENTIFICATION BY MASS SPECTROMETRY [LARGE SCALE ANALYSIS]</scope>
    <source>
        <tissue>Cervix carcinoma</tissue>
        <tissue>Erythroleukemia</tissue>
    </source>
</reference>
<reference key="37">
    <citation type="journal article" date="2013" name="Nat. Cell Biol.">
        <title>Ubiquitylation-dependent localization of PLK1 in mitosis.</title>
        <authorList>
            <person name="Beck J."/>
            <person name="Maerki S."/>
            <person name="Posch M."/>
            <person name="Metzger T."/>
            <person name="Persaud A."/>
            <person name="Scheel H."/>
            <person name="Hofmann K."/>
            <person name="Rotin D."/>
            <person name="Pedrioli P."/>
            <person name="Swedlow J.R."/>
            <person name="Peter M."/>
            <person name="Sumara I."/>
        </authorList>
    </citation>
    <scope>FUNCTION</scope>
    <scope>IDENTIFICATION IN THE BCR(KLHL22) COMPLEX</scope>
</reference>
<reference key="38">
    <citation type="journal article" date="2014" name="Clin. Cancer Res.">
        <title>Oncogenic function of SCCRO5/DCUN1D5 requires its Neddylation E3 activity and nuclear localization.</title>
        <authorList>
            <person name="Bommelje C.C."/>
            <person name="Weeda V.B."/>
            <person name="Huang G."/>
            <person name="Shah K."/>
            <person name="Bains S."/>
            <person name="Buss E."/>
            <person name="Shaha M."/>
            <person name="Goenen M."/>
            <person name="Ghossein R."/>
            <person name="Ramanathan S.Y."/>
            <person name="Singh B."/>
        </authorList>
    </citation>
    <scope>INTERACTION WITH DCUN1D5</scope>
</reference>
<reference key="39">
    <citation type="journal article" date="2014" name="J. Biol. Chem.">
        <title>SCCRO3 (DCUN1D3) antagonizes the neddylation and oncogenic activity of SCCRO (DCUN1D1).</title>
        <authorList>
            <person name="Huang G."/>
            <person name="Stock C."/>
            <person name="Bommelje C.C."/>
            <person name="Weeda V.B."/>
            <person name="Shah K."/>
            <person name="Bains S."/>
            <person name="Buss E."/>
            <person name="Shaha M."/>
            <person name="Rechler W."/>
            <person name="Ramanathan S.Y."/>
            <person name="Singh B."/>
        </authorList>
    </citation>
    <scope>INTERACTION WITH DCUN1D3</scope>
</reference>
<reference key="40">
    <citation type="journal article" date="2015" name="Mol. Cell">
        <title>CUL3-KBTBD6/KBTBD7 ubiquitin ligase cooperates with GABARAP proteins to spatially restrict TIAM1-RAC1 signaling.</title>
        <authorList>
            <person name="Genau H.M."/>
            <person name="Huber J."/>
            <person name="Baschieri F."/>
            <person name="Akutsu M."/>
            <person name="Doetsch V."/>
            <person name="Farhan H."/>
            <person name="Rogov V."/>
            <person name="Behrends C."/>
        </authorList>
    </citation>
    <scope>SUBUNIT</scope>
</reference>
<reference key="41">
    <citation type="journal article" date="2016" name="Cell">
        <title>Two distinct types of E3 ligases work in unison to regulate substrate ubiquitylation.</title>
        <authorList>
            <person name="Scott D.C."/>
            <person name="Rhee D.Y."/>
            <person name="Duda D.M."/>
            <person name="Kelsall I.R."/>
            <person name="Olszewski J.L."/>
            <person name="Paulo J.A."/>
            <person name="de Jong A."/>
            <person name="Ovaa H."/>
            <person name="Alpi A.F."/>
            <person name="Harper J.W."/>
            <person name="Schulman B.A."/>
        </authorList>
    </citation>
    <scope>FUNCTION</scope>
</reference>
<reference key="42">
    <citation type="journal article" date="2016" name="J. Cell Sci.">
        <title>Characterization of the mammalian family of DCN-type NEDD8 E3 ligases.</title>
        <authorList>
            <person name="Keuss M.J."/>
            <person name="Thomas Y."/>
            <person name="Mcarthur R."/>
            <person name="Wood N.T."/>
            <person name="Knebel A."/>
            <person name="Kurz T."/>
        </authorList>
    </citation>
    <scope>INTERACTION WITH DCUN1D1; DCUN1D2; DCUN1D3; DCUN1D4 AND DCUN1D5</scope>
</reference>
<reference key="43">
    <citation type="journal article" date="2017" name="Mol. Cell">
        <title>NOTCH2 Hajdu-Cheney mutations escape SCFFBW7-dependent proteolysis to promote osteoporosis.</title>
        <authorList>
            <person name="Fukushima H."/>
            <person name="Shimizu K."/>
            <person name="Watahiki A."/>
            <person name="Hoshikawa S."/>
            <person name="Kosho T."/>
            <person name="Oba D."/>
            <person name="Sakano S."/>
            <person name="Arakaki M."/>
            <person name="Yamada A."/>
            <person name="Nagashima K."/>
            <person name="Okabe K."/>
            <person name="Fukumoto S."/>
            <person name="Jimi E."/>
            <person name="Bigas A."/>
            <person name="Nakayama K.I."/>
            <person name="Nakayama K."/>
            <person name="Aoki Y."/>
            <person name="Wei W."/>
            <person name="Inuzuka H."/>
        </authorList>
    </citation>
    <scope>INTERACTION WITH NOTCH2</scope>
</reference>
<reference key="44">
    <citation type="journal article" date="2018" name="Nature">
        <title>KLHL22 activates amino-acid-dependent mTORC1 signalling to promote tumorigenesis and ageing.</title>
        <authorList>
            <person name="Chen J."/>
            <person name="Ou Y."/>
            <person name="Yang Y."/>
            <person name="Li W."/>
            <person name="Xu Y."/>
            <person name="Xie Y."/>
            <person name="Liu Y."/>
        </authorList>
    </citation>
    <scope>FUNCTION</scope>
</reference>
<reference key="45">
    <citation type="journal article" date="2020" name="Nat. Commun.">
        <title>The cooperative action of CSB, CSA, and UVSSA target TFIIH to DNA damage-stalled RNA polymerase II.</title>
        <authorList>
            <person name="van der Weegen Y."/>
            <person name="Golan-Berman H."/>
            <person name="Mevissen T.E.T."/>
            <person name="Apelt K."/>
            <person name="Gonzalez-Prieto R."/>
            <person name="Goedhart J."/>
            <person name="Heilbrun E.E."/>
            <person name="Vertegaal A.C.O."/>
            <person name="van den Heuvel D."/>
            <person name="Walter J.C."/>
            <person name="Adar S."/>
            <person name="Luijsterburg M.S."/>
        </authorList>
    </citation>
    <scope>FUNCTION</scope>
    <scope>IDENTIFICATION IN A DCX (DDB1-CUL4-X-BOX) E3 UBIQUITIN-PROTEIN LIGASE COMPLEX</scope>
</reference>
<reference key="46">
    <citation type="journal article" date="2021" name="Cell Stem Cell">
        <title>UM171 Preserves Epigenetic Marks that Are Reduced in Ex Vivo Culture of Human HSCs via Potentiation of the CLR3-KBTBD4 Complex.</title>
        <authorList>
            <person name="Chagraoui J."/>
            <person name="Girard S."/>
            <person name="Spinella J.F."/>
            <person name="Simon L."/>
            <person name="Bonneil E."/>
            <person name="Mayotte N."/>
            <person name="MacRae T."/>
            <person name="Coulombe-Huntington J."/>
            <person name="Bertomeu T."/>
            <person name="Moison C."/>
            <person name="Tomellini E."/>
            <person name="Thibault P."/>
            <person name="Tyers M."/>
            <person name="Marinier A."/>
            <person name="Sauvageau G."/>
        </authorList>
    </citation>
    <scope>FUNCTION</scope>
    <scope>IDENTIFICATION IN THE BCR(KBTBD4) UBIQUITIN LIGASE COMPLEX</scope>
</reference>
<reference key="47">
    <citation type="journal article" date="2021" name="Nature">
        <title>Structural basis of human transcription-DNA repair coupling.</title>
        <authorList>
            <person name="Kokic G."/>
            <person name="Wagner F.R."/>
            <person name="Chernev A."/>
            <person name="Urlaub H."/>
            <person name="Cramer P."/>
        </authorList>
    </citation>
    <scope>FUNCTION</scope>
</reference>
<reference key="48">
    <citation type="journal article" date="2022" name="Nucleic Acids Res.">
        <title>ARMC5 is part of an RPB1-specific ubiquitin ligase implicated in adrenal hyperplasia.</title>
        <authorList>
            <person name="Lao L."/>
            <person name="Bourdeau I."/>
            <person name="Gagliardi L."/>
            <person name="He X."/>
            <person name="Shi W."/>
            <person name="Hao B."/>
            <person name="Tan M."/>
            <person name="Hu Y."/>
            <person name="Peng J."/>
            <person name="Coulombe B."/>
            <person name="Torpy D.J."/>
            <person name="Scott H.S."/>
            <person name="Lacroix A."/>
            <person name="Luo H."/>
            <person name="Wu J."/>
        </authorList>
    </citation>
    <scope>IDENTIFICATION IN THE BCR(ARMC5) UBIQUITIN LIGASE COMPLEX</scope>
</reference>
<reference key="49">
    <citation type="journal article" date="2024" name="Genome Biol.">
        <title>ARMC5 controls the degradation of most Pol II subunits, and ARMC5 mutation increases neural tube defect risks in mice and humans.</title>
        <authorList>
            <person name="Luo H."/>
            <person name="Lao L."/>
            <person name="Au K.S."/>
            <person name="Northrup H."/>
            <person name="He X."/>
            <person name="Forget D."/>
            <person name="Gauthier M.S."/>
            <person name="Coulombe B."/>
            <person name="Bourdeau I."/>
            <person name="Shi W."/>
            <person name="Gagliardi L."/>
            <person name="Fragoso M.C.B.V."/>
            <person name="Peng J."/>
            <person name="Wu J."/>
        </authorList>
    </citation>
    <scope>IDENTIFICATION IN THE BCR(ARMC5) UBIQUITIN LIGASE COMPLEX</scope>
</reference>
<reference key="50">
    <citation type="journal article" date="2024" name="Mol. Cell">
        <title>Redundant pathways for removal of defective RNA polymerase II complexes at a promoter-proximal pause checkpoint.</title>
        <authorList>
            <person name="Blears D."/>
            <person name="Lou J."/>
            <person name="Fong N."/>
            <person name="Mitter R."/>
            <person name="Sheridan R.M."/>
            <person name="He D."/>
            <person name="Dirac-Svejstrup A.B."/>
            <person name="Bentley D."/>
            <person name="Svejstrup J.Q."/>
        </authorList>
    </citation>
    <scope>FUNCTION</scope>
    <scope>PATHWAY</scope>
    <scope>IDENTIFICATION IN THE BCR(ARMC5) UBIQUITIN LIGASE COMPLEX</scope>
</reference>
<reference key="51">
    <citation type="journal article" date="2024" name="Mol. Cell">
        <title>CRL3ARMC5 ubiquitin ligase and Integrator phosphatase form parallel mechanisms to control early stages of RNA Pol II transcription.</title>
        <authorList>
            <person name="Cacioppo R."/>
            <person name="Gillis A."/>
            <person name="Shlamovitz I."/>
            <person name="Zeller A."/>
            <person name="Castiblanco D."/>
            <person name="Crisp A."/>
            <person name="Haworth B."/>
            <person name="Arabiotorre A."/>
            <person name="Abyaneh P."/>
            <person name="Bao Y."/>
            <person name="Sale J.E."/>
            <person name="Berry S."/>
            <person name="Tufegdzic Vidakovic A."/>
        </authorList>
    </citation>
    <scope>FUNCTION</scope>
    <scope>PATHWAY</scope>
    <scope>IDENTIFICATION IN THE BCR(ARMC5) UBIQUITIN LIGASE COMPLEX</scope>
</reference>
<reference key="52">
    <citation type="journal article" date="2025" name="Nature">
        <title>C-terminal amides mark proteins for degradation via SCF-FBXO31.</title>
        <authorList>
            <person name="Muhar M.F."/>
            <person name="Farnung J."/>
            <person name="Cernakova M."/>
            <person name="Hofmann R."/>
            <person name="Henneberg L.T."/>
            <person name="Pfleiderer M.M."/>
            <person name="Denoth-Lippuner A."/>
            <person name="Kalcic F."/>
            <person name="Nievergelt A.S."/>
            <person name="Peters Al-Bayati M."/>
            <person name="Sidiropoulos N.D."/>
            <person name="Beier V."/>
            <person name="Mann M."/>
            <person name="Jessberger S."/>
            <person name="Jinek M."/>
            <person name="Schulman B.A."/>
            <person name="Bode J.W."/>
            <person name="Corn J.E."/>
        </authorList>
    </citation>
    <scope>IDENTIFICATION IN THE SCF(FBXO31) UBIQUITIN LIGASE COMPLEX</scope>
</reference>
<reference evidence="53" key="53">
    <citation type="journal article" date="2002" name="Nature">
        <title>Structure of the Cul1-Rbx1-Skp1-F box Skp2 SCF ubiquitin ligase complex.</title>
        <authorList>
            <person name="Zheng N."/>
            <person name="Schulman B.A."/>
            <person name="Song L."/>
            <person name="Miller J.J."/>
            <person name="Jeffrey P.D."/>
            <person name="Wang P."/>
            <person name="Chu C."/>
            <person name="Koepp D.M."/>
            <person name="Elledge S.J."/>
            <person name="Pagano M."/>
            <person name="Conaway R.C."/>
            <person name="Conaway J.W."/>
            <person name="Harper J.W."/>
            <person name="Pavletich N.P."/>
        </authorList>
    </citation>
    <scope>X-RAY CRYSTALLOGRAPHY (3.0 ANGSTROMS) OF 19-108 IN COMPLEX WITH 17-776 OF CUL1</scope>
    <scope>X-RAY CRYSTALLOGRAPHY (3.0 ANGSTROMS) IN SCF COMPLEX WITH CUL1; SKP1 AND SKP2</scope>
    <scope>FUNCTION</scope>
    <scope>DOMAIN</scope>
</reference>
<reference evidence="59" key="54">
    <citation type="journal article" date="2012" name="Mol. Cell">
        <title>Structure of a glomulin-RBX1-CUL1 complex: inhibition of a RING E3 ligase through masking of its E2-binding surface.</title>
        <authorList>
            <person name="Duda D.M."/>
            <person name="Olszewski J.L."/>
            <person name="Tron A.E."/>
            <person name="Hammel M."/>
            <person name="Lambert L.J."/>
            <person name="Waddell M.B."/>
            <person name="Mittag T."/>
            <person name="DeCaprio J.A."/>
            <person name="Schulman B.A."/>
        </authorList>
    </citation>
    <scope>X-RAY CRYSTALLOGRAPHY (3.00 ANGSTROMS) OF 5-108 IN COMPLEX WITH CUL1; GLMN AND ZINC</scope>
    <scope>SUBUNIT</scope>
    <scope>INTERACTION WITH CDC34 AND GLMN</scope>
    <scope>FUNCTION</scope>
    <scope>DOMAIN</scope>
    <scope>PATHWAY</scope>
</reference>
<reference evidence="61" key="55">
    <citation type="journal article" date="2021" name="Nature">
        <title>A conserved mechanism for regulating replisome disassembly in eukaryotes.</title>
        <authorList>
            <person name="Jenkyn-Bedford M."/>
            <person name="Jones M.L."/>
            <person name="Baris Y."/>
            <person name="Labib K.P.M."/>
            <person name="Cannone G."/>
            <person name="Yeeles J.T.P."/>
            <person name="Deegan T.D."/>
        </authorList>
    </citation>
    <scope>STRUCTURE BY ELECTRON MICROSCOPY (2.80 ANGSTROMS) IN COMPLEX WITH REPLISOME AND DNA POLYMERASE EPSILON</scope>
    <scope>SUBUNIT</scope>
</reference>
<reference evidence="62" key="56">
    <citation type="journal article" date="2022" name="Nat. Struct. Mol. Biol.">
        <title>Structure of CRL7FBXW8 reveals coupling with CUL1-RBX1/ROC1 for multi-cullin-RING E3-catalyzed ubiquitin ligation.</title>
        <authorList>
            <person name="Hopf L.V.M."/>
            <person name="Baek K."/>
            <person name="Kluegel M."/>
            <person name="von Gronau S."/>
            <person name="Xiong Y."/>
            <person name="Schulman B.A."/>
        </authorList>
    </citation>
    <scope>STRUCTURE BY ELECTRON MICROSCOPY (2.80 ANGSTROMS) OF IN CUL7-RING(FBXW8) COMPLEX</scope>
    <scope>FUNCTION</scope>
    <scope>SUBUNIT</scope>
    <scope>INTERACTION WITH CUL7</scope>
</reference>
<reference evidence="66 67 68" key="57">
    <citation type="journal article" date="2024" name="Nat. Struct. Mol. Biol.">
        <title>Noncanonical assembly, neddylation and chimeric cullin-RING/RBR ubiquitylation by the 1.8 MDa CUL9 E3 ligase complex.</title>
        <authorList>
            <person name="Horn-Ghetko D."/>
            <person name="Hopf L.V.M."/>
            <person name="Tripathi-Giesgen I."/>
            <person name="Du J."/>
            <person name="Kostrhon S."/>
            <person name="Vu D.T."/>
            <person name="Beier V."/>
            <person name="Steigenberger B."/>
            <person name="Prabu J.R."/>
            <person name="Stier L."/>
            <person name="Bruss E.M."/>
            <person name="Mann M."/>
            <person name="Xiong Y."/>
            <person name="Schulman B.A."/>
        </authorList>
    </citation>
    <scope>STRUCTURE BY ELECTRON MICROSCOPY (3.37 ANGSTROMS) IN COMPLEX WITH ZINC AND CUL9</scope>
    <scope>FUNCTION</scope>
    <scope>PATHWAY</scope>
    <scope>SUBUNIT</scope>
</reference>
<reference evidence="65" key="58">
    <citation type="journal article" date="2024" name="Nat. Struct. Mol. Biol.">
        <title>Mechanism of millisecond Lys48-linked poly-ubiquitin chain formation by cullin-RING ligases.</title>
        <authorList>
            <person name="Liwocha J."/>
            <person name="Li J."/>
            <person name="Purser N."/>
            <person name="Rattanasopa C."/>
            <person name="Maiwald S."/>
            <person name="Krist D.T."/>
            <person name="Scott D.C."/>
            <person name="Steigenberger B."/>
            <person name="Prabu J.R."/>
            <person name="Schulman B.A."/>
            <person name="Kleiger G."/>
        </authorList>
    </citation>
    <scope>STRUCTURE BY ELECTRON MICROSCOPY (3.76 ANGSTROMS) IN COMPLEX WITH UBE2R2 AND CRL2(FEM1C) COMPLEX</scope>
    <scope>FUNCTION</scope>
    <scope>CATALYTIC ACTIVITY</scope>
    <scope>PATHWAY</scope>
    <scope>SUBUNIT</scope>
    <scope>MUTAGENESIS OF ARG-91</scope>
</reference>
<reference evidence="63 64" key="59">
    <citation type="journal article" date="2024" name="Nat. Struct. Mol. Biol.">
        <title>Structural basis for RNA polymerase II ubiquitylation and inactivation in transcription-coupled repair.</title>
        <authorList>
            <person name="Kokic G."/>
            <person name="Yakoub G."/>
            <person name="van den Heuvel D."/>
            <person name="Wondergem A.P."/>
            <person name="van der Meer P.J."/>
            <person name="van der Weegen Y."/>
            <person name="Chernev A."/>
            <person name="Fianu I."/>
            <person name="Fokkens T.J."/>
            <person name="Lorenz S."/>
            <person name="Urlaub H."/>
            <person name="Cramer P."/>
            <person name="Luijsterburg M.S."/>
        </authorList>
    </citation>
    <scope>STRUCTURE BY ELECTRON MICROSCOPY (3.50 ANGSTROMS) IN COMPLEX WITH E3 UBIQUITIN-PROTEIN LIGASE COMPLEX</scope>
</reference>
<protein>
    <recommendedName>
        <fullName>E3 ubiquitin-protein ligase RBX1</fullName>
        <ecNumber evidence="7">2.3.2.27</ecNumber>
        <ecNumber evidence="7">2.3.2.32</ecNumber>
    </recommendedName>
    <alternativeName>
        <fullName evidence="50">E3 ubiquitin-protein transferase RBX1</fullName>
    </alternativeName>
    <alternativeName>
        <fullName>Protein ZYP</fullName>
    </alternativeName>
    <alternativeName>
        <fullName>RING finger protein 75</fullName>
    </alternativeName>
    <alternativeName>
        <fullName>RING-box protein 1</fullName>
        <shortName>Rbx1</shortName>
    </alternativeName>
    <alternativeName>
        <fullName>Regulator of cullins 1</fullName>
        <shortName evidence="49">ROC1</shortName>
    </alternativeName>
    <component>
        <recommendedName>
            <fullName>E3 ubiquitin-protein ligase RBX1, N-terminally processed</fullName>
        </recommendedName>
        <alternativeName>
            <fullName evidence="50">E3 ubiquitin-protein transferase RBX1, N-terminally processed</fullName>
        </alternativeName>
    </component>
</protein>
<feature type="chain" id="PRO_0000423264" description="E3 ubiquitin-protein ligase RBX1">
    <location>
        <begin position="1"/>
        <end position="108"/>
    </location>
</feature>
<feature type="initiator methionine" description="Removed; alternate" evidence="48 69 70 71 72">
    <location>
        <position position="1"/>
    </location>
</feature>
<feature type="chain" id="PRO_0000056013" description="E3 ubiquitin-protein ligase RBX1, N-terminally processed">
    <location>
        <begin position="2"/>
        <end position="108"/>
    </location>
</feature>
<feature type="zinc finger region" description="RING-type" evidence="2">
    <location>
        <begin position="53"/>
        <end position="98"/>
    </location>
</feature>
<feature type="binding site" evidence="10 44 52 53 54 55 56 57 58 59 60 67 68">
    <location>
        <position position="42"/>
    </location>
    <ligand>
        <name>Zn(2+)</name>
        <dbReference type="ChEBI" id="CHEBI:29105"/>
        <label>1</label>
    </ligand>
</feature>
<feature type="binding site" evidence="10 44 52 53 54 55 56 57 58 59 60 67 68">
    <location>
        <position position="45"/>
    </location>
    <ligand>
        <name>Zn(2+)</name>
        <dbReference type="ChEBI" id="CHEBI:29105"/>
        <label>1</label>
    </ligand>
</feature>
<feature type="binding site" evidence="10 44 52 53 54 55 56 57 58 59 60 62 67 68">
    <location>
        <position position="53"/>
    </location>
    <ligand>
        <name>Zn(2+)</name>
        <dbReference type="ChEBI" id="CHEBI:29105"/>
        <label>2</label>
    </ligand>
</feature>
<feature type="binding site" evidence="10 44 52 53 54 55 56 57 58 59 60 62 67 68">
    <location>
        <position position="56"/>
    </location>
    <ligand>
        <name>Zn(2+)</name>
        <dbReference type="ChEBI" id="CHEBI:29105"/>
        <label>2</label>
    </ligand>
</feature>
<feature type="binding site" evidence="10 44 52 53 54 55 56 57 58 59 60 62 67 68">
    <location>
        <position position="68"/>
    </location>
    <ligand>
        <name>Zn(2+)</name>
        <dbReference type="ChEBI" id="CHEBI:29105"/>
        <label>2</label>
    </ligand>
</feature>
<feature type="binding site" evidence="10 44 52 53 54 55 56 57 58 59 60 67 68">
    <location>
        <position position="75"/>
    </location>
    <ligand>
        <name>Zn(2+)</name>
        <dbReference type="ChEBI" id="CHEBI:29105"/>
        <label>3</label>
    </ligand>
</feature>
<feature type="binding site" evidence="10 44 52 53 54 55 56 57 58 59 60 67 68">
    <location>
        <position position="77"/>
    </location>
    <ligand>
        <name>Zn(2+)</name>
        <dbReference type="ChEBI" id="CHEBI:29105"/>
        <label>3</label>
    </ligand>
</feature>
<feature type="binding site" evidence="10 44 52 53 54 55 56 57 58 59 60 67 68">
    <location>
        <position position="80"/>
    </location>
    <ligand>
        <name>Zn(2+)</name>
        <dbReference type="ChEBI" id="CHEBI:29105"/>
        <label>1</label>
    </ligand>
</feature>
<feature type="binding site" evidence="10 44 52 53 54 55 56 57 58 59 60 62 67 68">
    <location>
        <position position="82"/>
    </location>
    <ligand>
        <name>Zn(2+)</name>
        <dbReference type="ChEBI" id="CHEBI:29105"/>
        <label>2</label>
    </ligand>
</feature>
<feature type="binding site" evidence="10 44 52 53 54 55 57 58 59 60 67 68">
    <location>
        <position position="83"/>
    </location>
    <ligand>
        <name>Zn(2+)</name>
        <dbReference type="ChEBI" id="CHEBI:29105"/>
        <label>1</label>
    </ligand>
</feature>
<feature type="binding site" evidence="10 44 52 53 54 55 56 57 58 59 60 67 68">
    <location>
        <position position="94"/>
    </location>
    <ligand>
        <name>Zn(2+)</name>
        <dbReference type="ChEBI" id="CHEBI:29105"/>
        <label>3</label>
    </ligand>
</feature>
<feature type="binding site" evidence="10 44 52 53 54 55 56 57 58 59 60 67 68">
    <location>
        <position position="97"/>
    </location>
    <ligand>
        <name>Zn(2+)</name>
        <dbReference type="ChEBI" id="CHEBI:29105"/>
        <label>3</label>
    </ligand>
</feature>
<feature type="modified residue" description="N-acetylmethionine" evidence="70">
    <location>
        <position position="1"/>
    </location>
</feature>
<feature type="modified residue" description="N-acetylalanine; in E3 ubiquitin-protein ligase RBX1, N-terminally processed" evidence="48 69 70 71 72">
    <location>
        <position position="2"/>
    </location>
</feature>
<feature type="modified residue" description="Phosphothreonine" evidence="70 73">
    <location>
        <position position="9"/>
    </location>
</feature>
<feature type="mutagenesis site" description="Strong reduction in ligase activity; when associated with A-56." evidence="5">
    <original>C</original>
    <variation>A</variation>
    <location>
        <position position="53"/>
    </location>
</feature>
<feature type="mutagenesis site" description="Strong reduction in ligase activity; when associated with A-53." evidence="5">
    <original>C</original>
    <variation>A</variation>
    <location>
        <position position="56"/>
    </location>
</feature>
<feature type="mutagenesis site" description="Strong reduction in ligase activity; when associated with A-77." evidence="5">
    <original>C</original>
    <variation>A</variation>
    <location>
        <position position="75"/>
    </location>
</feature>
<feature type="mutagenesis site" description="Strong reduction in ligase activity; when associated with A-75." evidence="5">
    <original>H</original>
    <variation>A</variation>
    <location>
        <position position="77"/>
    </location>
</feature>
<feature type="mutagenesis site" description="Impairs UBE2R2 activation by neddylated Cul2-RING(FEM1C) complex." evidence="43">
    <original>R</original>
    <variation>E</variation>
    <location>
        <position position="91"/>
    </location>
</feature>
<feature type="sequence conflict" description="In Ref. 9; AAM21718." evidence="50" ref="9">
    <original>G</original>
    <variation>S</variation>
    <location>
        <position position="18"/>
    </location>
</feature>
<feature type="strand" evidence="76">
    <location>
        <begin position="21"/>
        <end position="37"/>
    </location>
</feature>
<feature type="strand" evidence="74">
    <location>
        <begin position="39"/>
        <end position="41"/>
    </location>
</feature>
<feature type="strand" evidence="76">
    <location>
        <begin position="43"/>
        <end position="45"/>
    </location>
</feature>
<feature type="strand" evidence="77">
    <location>
        <begin position="47"/>
        <end position="51"/>
    </location>
</feature>
<feature type="helix" evidence="76">
    <location>
        <begin position="56"/>
        <end position="59"/>
    </location>
</feature>
<feature type="strand" evidence="79">
    <location>
        <begin position="60"/>
        <end position="62"/>
    </location>
</feature>
<feature type="helix" evidence="78">
    <location>
        <begin position="63"/>
        <end position="66"/>
    </location>
</feature>
<feature type="strand" evidence="76">
    <location>
        <begin position="70"/>
        <end position="73"/>
    </location>
</feature>
<feature type="strand" evidence="74">
    <location>
        <begin position="74"/>
        <end position="76"/>
    </location>
</feature>
<feature type="strand" evidence="76">
    <location>
        <begin position="78"/>
        <end position="80"/>
    </location>
</feature>
<feature type="helix" evidence="76">
    <location>
        <begin position="81"/>
        <end position="88"/>
    </location>
</feature>
<feature type="strand" evidence="75">
    <location>
        <begin position="90"/>
        <end position="93"/>
    </location>
</feature>
<feature type="strand" evidence="76">
    <location>
        <begin position="95"/>
        <end position="97"/>
    </location>
</feature>
<feature type="strand" evidence="76">
    <location>
        <begin position="103"/>
        <end position="105"/>
    </location>
</feature>
<name>RBX1_HUMAN</name>
<gene>
    <name evidence="51" type="primary">RBX1</name>
    <name type="synonym">RNF75</name>
    <name evidence="49" type="synonym">ROC1</name>
</gene>
<sequence length="108" mass="12274">MAAAMDVDTPSGTNSGAGKKRFEVKKWNAVALWAWDIVVDNCAICRNHIMDLCIECQANQASATSEECTVAWGVCNHAFHFHCISRWLKTRQVCPLDNREWEFQKYGH</sequence>
<proteinExistence type="evidence at protein level"/>